<keyword id="KW-0002">3D-structure</keyword>
<keyword id="KW-0024">Alternative initiation</keyword>
<keyword id="KW-0025">Alternative splicing</keyword>
<keyword id="KW-0160">Chromosomal rearrangement</keyword>
<keyword id="KW-0963">Cytoplasm</keyword>
<keyword id="KW-0225">Disease variant</keyword>
<keyword id="KW-0238">DNA-binding</keyword>
<keyword id="KW-1017">Isopeptide bond</keyword>
<keyword id="KW-0479">Metal-binding</keyword>
<keyword id="KW-0539">Nucleus</keyword>
<keyword id="KW-1267">Proteomics identification</keyword>
<keyword id="KW-1185">Reference proteome</keyword>
<keyword id="KW-0677">Repeat</keyword>
<keyword id="KW-0691">RNA editing</keyword>
<keyword id="KW-0694">RNA-binding</keyword>
<keyword id="KW-0804">Transcription</keyword>
<keyword id="KW-0805">Transcription regulation</keyword>
<keyword id="KW-0043">Tumor suppressor</keyword>
<keyword id="KW-0832">Ubl conjugation</keyword>
<keyword id="KW-0862">Zinc</keyword>
<keyword id="KW-0863">Zinc-finger</keyword>
<protein>
    <recommendedName>
        <fullName>Wilms tumor protein</fullName>
    </recommendedName>
    <alternativeName>
        <fullName>WT33</fullName>
    </alternativeName>
</protein>
<name>WT1_HUMAN</name>
<comment type="function">
    <text evidence="20 22 23 25 26 28 30">Transcription factor that plays an important role in cellular development and cell survival (PubMed:7862533). Recognizes and binds to the DNA sequence 5'-GCG(T/G)GGGCG-3' (PubMed:17716689, PubMed:25258363, PubMed:7862533). Regulates the expression of numerous target genes, including EPO. Plays an essential role for development of the urogenital system. It has a tumor suppressor as well as an oncogenic role in tumor formation. Function may be isoform-specific: isoforms lacking the KTS motif may act as transcription factors (PubMed:15520190). Isoforms containing the KTS motif may bind mRNA and play a role in mRNA metabolism or splicing (PubMed:16934801). Isoform 1 has lower affinity for DNA, and can bind RNA (PubMed:19123921).</text>
</comment>
<comment type="subunit">
    <text evidence="1 7 10 11 19 22 23 26">Homodimer. Interacts with WTIP. Interacts with actively translating polysomes. Detected in nuclear ribonucleoprotein (mRNP) particles. Interacts with HNRNPU via the zinc-finger region. Interacts with U2AF2. Interacts with CITED2 (By similarity). Interacts with ZNF224 via the zinc-finger region. Interacts with WTAP and SRY. Interacts with AMER1. Interacts with RBM4.</text>
</comment>
<comment type="interaction">
    <interactant intactId="EBI-2320534">
        <id>P19544</id>
    </interactant>
    <interactant intactId="EBI-739789">
        <id>Q92997</id>
        <label>DVL3</label>
    </interactant>
    <organismsDiffer>false</organismsDiffer>
    <experiments>3</experiments>
</comment>
<comment type="interaction">
    <interactant intactId="EBI-2320534">
        <id>P19544</id>
    </interactant>
    <interactant intactId="EBI-10171697">
        <id>Q6A162</id>
        <label>KRT40</label>
    </interactant>
    <organismsDiffer>false</organismsDiffer>
    <experiments>4</experiments>
</comment>
<comment type="interaction">
    <interactant intactId="EBI-2320534">
        <id>P19544</id>
    </interactant>
    <interactant intactId="EBI-10171774">
        <id>P60410</id>
        <label>KRTAP10-8</label>
    </interactant>
    <organismsDiffer>false</organismsDiffer>
    <experiments>3</experiments>
</comment>
<comment type="interaction">
    <interactant intactId="EBI-2320534">
        <id>P19544</id>
    </interactant>
    <interactant intactId="EBI-310727">
        <id>Q6N021</id>
        <label>TET2</label>
    </interactant>
    <organismsDiffer>false</organismsDiffer>
    <experiments>9</experiments>
</comment>
<comment type="interaction">
    <interactant intactId="EBI-11745701">
        <id>P19544-6</id>
    </interactant>
    <interactant intactId="EBI-77613">
        <id>P05067</id>
        <label>APP</label>
    </interactant>
    <organismsDiffer>false</organismsDiffer>
    <experiments>3</experiments>
</comment>
<comment type="interaction">
    <interactant intactId="EBI-11745701">
        <id>P19544-6</id>
    </interactant>
    <interactant intactId="EBI-711810">
        <id>O14503</id>
        <label>BHLHE40</label>
    </interactant>
    <organismsDiffer>false</organismsDiffer>
    <experiments>3</experiments>
</comment>
<comment type="interaction">
    <interactant intactId="EBI-11745701">
        <id>P19544-6</id>
    </interactant>
    <interactant intactId="EBI-25837549">
        <id>P28329-3</id>
        <label>CHAT</label>
    </interactant>
    <organismsDiffer>false</organismsDiffer>
    <experiments>3</experiments>
</comment>
<comment type="interaction">
    <interactant intactId="EBI-11745701">
        <id>P19544-6</id>
    </interactant>
    <interactant intactId="EBI-3867333">
        <id>A8MQ03</id>
        <label>CYSRT1</label>
    </interactant>
    <organismsDiffer>false</organismsDiffer>
    <experiments>3</experiments>
</comment>
<comment type="interaction">
    <interactant intactId="EBI-11745701">
        <id>P19544-6</id>
    </interactant>
    <interactant intactId="EBI-357034">
        <id>P25685</id>
        <label>DNAJB1</label>
    </interactant>
    <organismsDiffer>false</organismsDiffer>
    <experiments>3</experiments>
</comment>
<comment type="interaction">
    <interactant intactId="EBI-11745701">
        <id>P19544-6</id>
    </interactant>
    <interactant intactId="EBI-348399">
        <id>P22607</id>
        <label>FGFR3</label>
    </interactant>
    <organismsDiffer>false</organismsDiffer>
    <experiments>3</experiments>
</comment>
<comment type="interaction">
    <interactant intactId="EBI-11745701">
        <id>P19544-6</id>
    </interactant>
    <interactant intactId="EBI-2549423">
        <id>Q6NT76</id>
        <label>HMBOX1</label>
    </interactant>
    <organismsDiffer>false</organismsDiffer>
    <experiments>3</experiments>
</comment>
<comment type="interaction">
    <interactant intactId="EBI-11745701">
        <id>P19544-6</id>
    </interactant>
    <interactant intactId="EBI-350145">
        <id>P01112</id>
        <label>HRAS</label>
    </interactant>
    <organismsDiffer>false</organismsDiffer>
    <experiments>3</experiments>
</comment>
<comment type="interaction">
    <interactant intactId="EBI-11745701">
        <id>P19544-6</id>
    </interactant>
    <interactant intactId="EBI-358808">
        <id>O15397</id>
        <label>IPO8</label>
    </interactant>
    <organismsDiffer>false</organismsDiffer>
    <experiments>3</experiments>
</comment>
<comment type="interaction">
    <interactant intactId="EBI-11745701">
        <id>P19544-6</id>
    </interactant>
    <interactant intactId="EBI-12012928">
        <id>P60371</id>
        <label>KRTAP10-6</label>
    </interactant>
    <organismsDiffer>false</organismsDiffer>
    <experiments>3</experiments>
</comment>
<comment type="interaction">
    <interactant intactId="EBI-11745701">
        <id>P19544-6</id>
    </interactant>
    <interactant intactId="EBI-10172290">
        <id>P60409</id>
        <label>KRTAP10-7</label>
    </interactant>
    <organismsDiffer>false</organismsDiffer>
    <experiments>3</experiments>
</comment>
<comment type="interaction">
    <interactant intactId="EBI-11745701">
        <id>P19544-6</id>
    </interactant>
    <interactant intactId="EBI-1051317">
        <id>Q9H4L5</id>
        <label>OSBPL3</label>
    </interactant>
    <organismsDiffer>false</organismsDiffer>
    <experiments>3</experiments>
</comment>
<comment type="interaction">
    <interactant intactId="EBI-11745701">
        <id>P19544-6</id>
    </interactant>
    <interactant intactId="EBI-716404">
        <id>P16284</id>
        <label>PECAM1</label>
    </interactant>
    <organismsDiffer>false</organismsDiffer>
    <experiments>3</experiments>
</comment>
<comment type="interaction">
    <interactant intactId="EBI-11745701">
        <id>P19544-6</id>
    </interactant>
    <interactant intactId="EBI-79165">
        <id>Q9NRD5</id>
        <label>PICK1</label>
    </interactant>
    <organismsDiffer>false</organismsDiffer>
    <experiments>3</experiments>
</comment>
<comment type="interaction">
    <interactant intactId="EBI-11745701">
        <id>P19544-6</id>
    </interactant>
    <interactant intactId="EBI-307104">
        <id>Q13501</id>
        <label>SQSTM1</label>
    </interactant>
    <organismsDiffer>false</organismsDiffer>
    <experiments>3</experiments>
</comment>
<comment type="interaction">
    <interactant intactId="EBI-11745701">
        <id>P19544-6</id>
    </interactant>
    <interactant intactId="EBI-296151">
        <id>P37173</id>
        <label>TGFBR2</label>
    </interactant>
    <organismsDiffer>false</organismsDiffer>
    <experiments>3</experiments>
</comment>
<comment type="interaction">
    <interactant intactId="EBI-11745701">
        <id>P19544-6</id>
    </interactant>
    <interactant intactId="EBI-751647">
        <id>Q15007</id>
        <label>WTAP</label>
    </interactant>
    <organismsDiffer>false</organismsDiffer>
    <experiments>3</experiments>
</comment>
<comment type="interaction">
    <interactant intactId="EBI-11745701">
        <id>P19544-6</id>
    </interactant>
    <interactant intactId="EBI-527853">
        <id>Q9UGI0</id>
        <label>ZRANB1</label>
    </interactant>
    <organismsDiffer>false</organismsDiffer>
    <experiments>3</experiments>
</comment>
<comment type="subcellular location">
    <subcellularLocation>
        <location evidence="20">Nucleus</location>
    </subcellularLocation>
    <subcellularLocation>
        <location>Nucleus</location>
        <location>Nucleolus</location>
    </subcellularLocation>
    <subcellularLocation>
        <location evidence="1">Cytoplasm</location>
    </subcellularLocation>
    <text evidence="1 20">Isoforms lacking the KTS motif have a diffuse nuclear location (PubMed:15520190). Shuttles between nucleus and cytoplasm.</text>
</comment>
<comment type="subcellular location">
    <molecule>Isoform 1</molecule>
    <subcellularLocation>
        <location evidence="20">Nucleus speckle</location>
    </subcellularLocation>
</comment>
<comment type="subcellular location">
    <molecule>Isoform 4</molecule>
    <subcellularLocation>
        <location evidence="20">Nucleus</location>
        <location evidence="20">Nucleoplasm</location>
    </subcellularLocation>
</comment>
<comment type="alternative products">
    <event type="alternative splicing"/>
    <event type="alternative initiation"/>
    <isoform>
        <id>P19544-1</id>
        <name>1</name>
        <sequence type="displayed"/>
    </isoform>
    <isoform>
        <id>P19544-2</id>
        <name>2</name>
        <sequence type="described" ref="VSP_006866 VSP_006867"/>
    </isoform>
    <isoform>
        <id>P19544-3</id>
        <name>3</name>
        <sequence type="described" ref="VSP_006866"/>
    </isoform>
    <isoform>
        <id>P19544-4</id>
        <name>4</name>
        <sequence type="described" ref="VSP_006867"/>
    </isoform>
    <isoform>
        <id>P19544-6</id>
        <name>6</name>
        <sequence type="described" ref="VSP_037582 VSP_037584 VSP_006867"/>
    </isoform>
    <isoform>
        <id>P19544-7</id>
        <name>7</name>
        <sequence type="described" ref="VSP_037583"/>
    </isoform>
    <isoform>
        <id>P19544-8</id>
        <name>8</name>
        <sequence type="described" ref="VSP_037583 VSP_006866"/>
    </isoform>
    <isoform>
        <id>P19544-9</id>
        <name>9</name>
        <sequence type="described" ref="VSP_037582 VSP_037584 VSP_006866"/>
    </isoform>
</comment>
<comment type="tissue specificity">
    <text>Expressed in the kidney and a subset of hematopoietic cells.</text>
</comment>
<comment type="domain">
    <text evidence="28">Binds to DNA motifs with the sequence 5'-GCG(T/G)GGGCG-3' via its C2H2-type zinc fingers. Starting from the N-terminus, the second zinc finger binds to the 3'-GCG motif, the middle zinc finger interacts with the central TGG motif, and the C-terminal zinc finger binds to the 5'-GCG motif. Binds double-stranded target DNA, irrespective of the cytosine methylation status. Has reduced affinity for target DNA where the cytosines have been oxidized to 5-hydroxymethylcytosine, 5-formylcytosine or 5-carboxylcytosine.</text>
</comment>
<comment type="domain">
    <text evidence="29">The 9aaTAD motif is a transactivation domain present in a large number of yeast and animal transcription factors.</text>
</comment>
<comment type="RNA editing">
    <location>
        <position position="281" evidence="31"/>
    </location>
    <text>Partially edited.</text>
</comment>
<comment type="disease" evidence="4">
    <disease id="DI-01628">
        <name>Frasier syndrome</name>
        <acronym>FS</acronym>
        <description>Characterized by a slowly progressing nephropathy leading to renal failure in adolescence or early adulthood, male pseudohermaphroditism, and no Wilms tumor. As for histological findings of the kidneys, focal glomerular sclerosis is often observed. There is phenotypic overlap with Denys-Drash syndrome. Inheritance is autosomal dominant.</description>
        <dbReference type="MIM" id="136680"/>
    </disease>
    <text>The disease is caused by variants affecting the gene represented in this entry.</text>
</comment>
<comment type="disease" evidence="13 15 40 42">
    <disease id="DI-02421">
        <name>Wilms tumor 1</name>
        <acronym>WT1</acronym>
        <description>Embryonal malignancy of the kidney that affects approximately 1 in 10'000 infants and young children. It occurs both in sporadic and hereditary forms.</description>
        <dbReference type="MIM" id="194070"/>
    </disease>
    <text>The disease is caused by variants affecting the gene represented in this entry.</text>
</comment>
<comment type="disease" evidence="5 6 8 9 12 14 18 21 32 33 34 35 37 38 39 41 42">
    <disease id="DI-01480">
        <name>Denys-Drash syndrome</name>
        <acronym>DDS</acronym>
        <description>Typical nephropathy characterized by diffuse mesangial sclerosis, genital abnormalities, and/or Wilms tumor. There is phenotypic overlap with WAGR syndrome and Frasier syndrome. Inheritance is autosomal dominant, but most cases are sporadic.</description>
        <dbReference type="MIM" id="194080"/>
    </disease>
    <text>The disease is caused by variants affecting the gene represented in this entry.</text>
</comment>
<comment type="disease" evidence="8 16 27 42 43">
    <disease id="DI-01838">
        <name>Nephrotic syndrome 4</name>
        <acronym>NPHS4</acronym>
        <description>A form of nephrotic syndrome, a renal disease clinically characterized by severe proteinuria, resulting in complications such as hypoalbuminemia, hyperlipidemia and edema. Kidney biopsies show non-specific histologic changes such as focal segmental glomerulosclerosis and diffuse mesangial proliferation. Some affected individuals have an inherited steroid-resistant form and progress to end-stage renal failure. Most patients with NPHS4 show diffuse mesangial sclerosis on renal biopsy, which is a pathologic entity characterized by mesangial matrix expansion with no mesangial hypercellularity, hypertrophy of the podocytes, vacuolized podocytes, thickened basement membranes, and diminished patency of the capillary lumen.</description>
        <dbReference type="MIM" id="256370"/>
    </disease>
    <text>The disease is caused by variants affecting the gene represented in this entry.</text>
</comment>
<comment type="disease" evidence="24">
    <disease id="DI-01955">
        <name>Meacham syndrome</name>
        <acronym>MEACHS</acronym>
        <description>Rare sporadically occurring multiple malformation syndrome characterized by male pseudohermaphroditism with abnormal internal female genitalia comprising a uterus and double or septate vagina, complex congenital heart defect and diaphragmatic abnormalities.</description>
        <dbReference type="MIM" id="608978"/>
    </disease>
    <text>The disease is caused by variants affecting the gene represented in this entry.</text>
</comment>
<comment type="disease">
    <text>A chromosomal aberration involving WT1 may be a cause of desmoplastic small round cell tumor (DSRCT). Translocation t(11;22)(p13;q12) with EWSR1.</text>
</comment>
<comment type="disease" evidence="36">
    <disease id="DI-03213">
        <name>Mesothelioma, malignant</name>
        <acronym>MESOM</acronym>
        <description>An aggressive neoplasm of the serosal lining of the chest. It appears as broad sheets of cells, with some regions containing spindle-shaped, sarcoma-like cells and other regions showing adenomatous patterns. Pleural mesotheliomas have been linked to exposure to asbestos.</description>
        <dbReference type="MIM" id="156240"/>
    </disease>
    <text>The disease may be caused by variants affecting the gene represented in this entry.</text>
</comment>
<comment type="miscellaneous">
    <text>Presence of the KTS motif hinders interactions between DNA and zinc-finger 4.</text>
</comment>
<comment type="miscellaneous">
    <molecule>Isoform 1</molecule>
    <text>Detected in nucleus speckle, may bind mRNA.</text>
</comment>
<comment type="miscellaneous">
    <molecule>Isoform 7</molecule>
    <text evidence="48">Produced by alternative initiation of isoform 1. Extended N-terminus.</text>
</comment>
<comment type="miscellaneous">
    <molecule>Isoform 8</molecule>
    <text evidence="48">Produced by alternative initiation of isoform 1. Extended N-terminus.</text>
</comment>
<comment type="similarity">
    <text evidence="48">Belongs to the EGR C2H2-type zinc-finger protein family.</text>
</comment>
<comment type="sequence caution" evidence="48">
    <conflict type="miscellaneous discrepancy">
        <sequence resource="EMBL-CDS" id="AAB33443"/>
    </conflict>
    <text>Contaminating sequence. Sequence of unknown origin in the N-terminal part.</text>
</comment>
<comment type="sequence caution" evidence="48">
    <conflict type="erroneous initiation">
        <sequence resource="EMBL-CDS" id="CAA35956"/>
    </conflict>
    <text>Extended N-terminus.</text>
</comment>
<comment type="sequence caution" evidence="48">
    <conflict type="miscellaneous discrepancy">
        <sequence resource="EMBL-CDS" id="CAA35956"/>
    </conflict>
    <text>Unusual initiator. The initiator methionine is coded by a non-canonical CTG leucine codon.</text>
</comment>
<comment type="sequence caution" evidence="48">
    <conflict type="erroneous initiation">
        <sequence resource="EMBL-CDS" id="CAC39220"/>
    </conflict>
    <text>Extended N-terminus.</text>
</comment>
<comment type="sequence caution" evidence="48">
    <conflict type="erroneous initiation">
        <sequence resource="EMBL-CDS" id="CAI95758"/>
    </conflict>
    <text>Extended N-terminus.</text>
</comment>
<comment type="sequence caution" evidence="48">
    <conflict type="erroneous initiation">
        <sequence resource="EMBL-CDS" id="CAI95759"/>
    </conflict>
    <text>Extended N-terminus.</text>
</comment>
<comment type="online information" name="Atlas of Genetics and Cytogenetics in Oncology and Haematology">
    <link uri="https://atlasgeneticsoncology.org/gene/78/WT1"/>
</comment>
<feature type="chain" id="PRO_0000047131" description="Wilms tumor protein">
    <location>
        <begin position="1"/>
        <end position="449"/>
    </location>
</feature>
<feature type="zinc finger region" description="C2H2-type 1" evidence="2">
    <location>
        <begin position="323"/>
        <end position="347"/>
    </location>
</feature>
<feature type="zinc finger region" description="C2H2-type 2" evidence="2">
    <location>
        <begin position="353"/>
        <end position="377"/>
    </location>
</feature>
<feature type="zinc finger region" description="C2H2-type 3" evidence="2">
    <location>
        <begin position="383"/>
        <end position="405"/>
    </location>
</feature>
<feature type="zinc finger region" description="C2H2-type 4" evidence="2">
    <location>
        <begin position="414"/>
        <end position="438"/>
    </location>
</feature>
<feature type="region of interest" description="Disordered" evidence="3">
    <location>
        <begin position="48"/>
        <end position="84"/>
    </location>
</feature>
<feature type="region of interest" description="Important for interaction with target DNA">
    <location>
        <begin position="367"/>
        <end position="381"/>
    </location>
</feature>
<feature type="region of interest" description="Important for interaction with target DNA">
    <location>
        <begin position="393"/>
        <end position="401"/>
    </location>
</feature>
<feature type="short sequence motif" description="9aaTAD" evidence="29">
    <location>
        <begin position="236"/>
        <end position="244"/>
    </location>
</feature>
<feature type="short sequence motif" description="KTS motif">
    <location>
        <begin position="408"/>
        <end position="410"/>
    </location>
</feature>
<feature type="compositionally biased region" description="Pro residues" evidence="3">
    <location>
        <begin position="54"/>
        <end position="69"/>
    </location>
</feature>
<feature type="site" description="Important for interaction with target DNA">
    <location>
        <position position="424"/>
    </location>
</feature>
<feature type="site" description="Important for interaction with target DNA">
    <location>
        <position position="430"/>
    </location>
</feature>
<feature type="cross-link" description="Glycyl lysine isopeptide (Lys-Gly) (interchain with G-Cter in SUMO)" evidence="20">
    <location>
        <position position="73"/>
    </location>
</feature>
<feature type="cross-link" description="Glycyl lysine isopeptide (Lys-Gly) (interchain with G-Cter in SUMO)" evidence="20">
    <location>
        <position position="177"/>
    </location>
</feature>
<feature type="cross-link" description="Glycyl lysine isopeptide (Lys-Gly) (interchain with G-Cter in SUMO2)" evidence="49">
    <location>
        <position position="444"/>
    </location>
</feature>
<feature type="splice variant" id="VSP_037582" description="In isoform 6 and isoform 9." evidence="44 45">
    <location>
        <begin position="1"/>
        <end position="144"/>
    </location>
</feature>
<feature type="splice variant" id="VSP_037583" description="In isoform 7 and isoform 8." evidence="47">
    <original>M</original>
    <variation>MDFLLLQDPASTCVPEPASQHTLRSGPGCLQQPEQQGVRDPGGIWAKLGAAEASAERLQGRRSRGASGSEPQQM</variation>
    <location>
        <position position="1"/>
    </location>
</feature>
<feature type="splice variant" id="VSP_037584" description="In isoform 6 and isoform 9." evidence="44 45">
    <original>RNQ</original>
    <variation>MEK</variation>
    <location>
        <begin position="145"/>
        <end position="147"/>
    </location>
</feature>
<feature type="splice variant" id="VSP_006866" description="In isoform 2, isoform 3, isoform 8 and isoform 9." evidence="44 46">
    <location>
        <begin position="250"/>
        <end position="266"/>
    </location>
</feature>
<feature type="splice variant" id="VSP_006867" description="In isoform 2, isoform 4 and isoform 6." evidence="44 45 46">
    <location>
        <begin position="408"/>
        <end position="410"/>
    </location>
</feature>
<feature type="sequence variant" id="VAR_043798" description="In a patient with hypospadias." evidence="17">
    <original>A</original>
    <variation>T</variation>
    <location>
        <position position="131"/>
    </location>
</feature>
<feature type="sequence variant" id="VAR_007739" description="In WT1; dbSNP:rs2234584." evidence="15 40">
    <original>P</original>
    <variation>S</variation>
    <location>
        <position position="181"/>
    </location>
</feature>
<feature type="sequence variant" id="VAR_007740" description="In WT1." evidence="42">
    <original>S</original>
    <variation>N</variation>
    <location>
        <position position="223"/>
    </location>
</feature>
<feature type="sequence variant" id="VAR_007741" description="In WT1." evidence="40">
    <original>G</original>
    <variation>A</variation>
    <location>
        <position position="253"/>
    </location>
</feature>
<feature type="sequence variant" id="VAR_007742" description="Found in a mesothelioma sample; somatic mutation; dbSNP:rs121907908." evidence="36">
    <original>S</original>
    <variation>G</variation>
    <location>
        <position position="273"/>
    </location>
</feature>
<feature type="sequence variant" id="VAR_058021" description="In RNA edited version.">
    <original>L</original>
    <variation>P</variation>
    <location>
        <position position="281"/>
    </location>
</feature>
<feature type="sequence variant" id="VAR_015053" description="In NPHS4." evidence="8">
    <original>R</original>
    <variation>Q</variation>
    <location>
        <position position="312"/>
    </location>
</feature>
<feature type="sequence variant" id="VAR_007743" description="In DDS." evidence="12">
    <original>C</original>
    <variation>Y</variation>
    <location>
        <position position="330"/>
    </location>
</feature>
<feature type="sequence variant" id="VAR_015054" description="In DDS." evidence="8">
    <original>M</original>
    <variation>R</variation>
    <location>
        <position position="342"/>
    </location>
</feature>
<feature type="sequence variant" id="VAR_043799" description="In WT1." evidence="15">
    <original>C</original>
    <variation>G</variation>
    <location>
        <position position="355"/>
    </location>
</feature>
<feature type="sequence variant" id="VAR_015055" description="In DDS." evidence="8 41">
    <original>C</original>
    <variation>Y</variation>
    <location>
        <position position="355"/>
    </location>
</feature>
<feature type="sequence variant" id="VAR_007744" description="In DDS.">
    <original>C</original>
    <variation>G</variation>
    <location>
        <position position="360"/>
    </location>
</feature>
<feature type="sequence variant" id="VAR_043800" description="In DDS." evidence="37">
    <original>C</original>
    <variation>Y</variation>
    <location>
        <position position="360"/>
    </location>
</feature>
<feature type="sequence variant" id="VAR_043801" description="In NPHS4." evidence="43">
    <original>F</original>
    <variation>L</variation>
    <location>
        <position position="364"/>
    </location>
</feature>
<feature type="sequence variant" id="VAR_007745" description="In WT1, DDS and MEACHS." evidence="13 15 24 42">
    <original>R</original>
    <variation>C</variation>
    <location>
        <position position="366"/>
    </location>
</feature>
<feature type="sequence variant" id="VAR_007746" description="In DDS and WT1." evidence="8 15 41 43">
    <original>R</original>
    <variation>H</variation>
    <location>
        <position position="366"/>
    </location>
</feature>
<feature type="sequence variant" id="VAR_043802" description="In DDS." evidence="38">
    <original>R</original>
    <variation>L</variation>
    <location>
        <position position="366"/>
    </location>
</feature>
<feature type="sequence variant" id="VAR_043803" description="In DDS." evidence="6">
    <original>Q</original>
    <variation>P</variation>
    <location>
        <position position="369"/>
    </location>
</feature>
<feature type="sequence variant" id="VAR_007747" description="In DDS and WT1." evidence="15">
    <original>H</original>
    <variation>Q</variation>
    <location>
        <position position="373"/>
    </location>
</feature>
<feature type="sequence variant" id="VAR_015056" description="In DDS." evidence="39">
    <original>H</original>
    <variation>Y</variation>
    <location>
        <position position="373"/>
    </location>
</feature>
<feature type="sequence variant" id="VAR_015057" description="In DDS." evidence="33">
    <original>H</original>
    <variation>R</variation>
    <location>
        <position position="377"/>
    </location>
</feature>
<feature type="sequence variant" id="VAR_007748" description="In NPHS4." evidence="42">
    <original>H</original>
    <variation>Y</variation>
    <location>
        <position position="377"/>
    </location>
</feature>
<feature type="sequence variant" id="VAR_043804" description="In NPHS4." evidence="43">
    <original>G</original>
    <variation>C</variation>
    <location>
        <position position="379"/>
    </location>
</feature>
<feature type="sequence variant" id="VAR_007749" description="In NPHS4." evidence="42">
    <original>F</original>
    <variation>L</variation>
    <location>
        <position position="383"/>
    </location>
</feature>
<feature type="sequence variant" id="VAR_015058" description="In DDS." evidence="8 41 43">
    <original>C</original>
    <variation>R</variation>
    <location>
        <position position="385"/>
    </location>
</feature>
<feature type="sequence variant" id="VAR_015059" description="In DDS." evidence="8">
    <original>C</original>
    <variation>F</variation>
    <location>
        <position position="388"/>
    </location>
</feature>
<feature type="sequence variant" id="VAR_043805" description="In NPHS4." evidence="16 27">
    <original>C</original>
    <variation>R</variation>
    <location>
        <position position="388"/>
    </location>
</feature>
<feature type="sequence variant" id="VAR_043806" description="In DDS." evidence="9">
    <original>C</original>
    <variation>Y</variation>
    <location>
        <position position="388"/>
    </location>
</feature>
<feature type="sequence variant" id="VAR_015060" description="In FS." evidence="4">
    <original>F</original>
    <variation>L</variation>
    <location>
        <position position="392"/>
    </location>
</feature>
<feature type="sequence variant" id="VAR_043807" description="In WT1." evidence="15">
    <original>R</original>
    <variation>L</variation>
    <location>
        <position position="394"/>
    </location>
</feature>
<feature type="sequence variant" id="VAR_043808" description="In DDS." evidence="12">
    <original>R</original>
    <variation>P</variation>
    <location>
        <position position="394"/>
    </location>
</feature>
<feature type="sequence variant" id="VAR_015061" description="In DDS and NPHS4." evidence="27 42 43">
    <original>R</original>
    <variation>Q</variation>
    <location>
        <position position="394"/>
    </location>
</feature>
<feature type="sequence variant" id="VAR_007750" description="In DDS, WT1, MEACHS and NPHS4." evidence="8 12 15 24 27 34 37 42 43">
    <original>R</original>
    <variation>W</variation>
    <location>
        <position position="394"/>
    </location>
</feature>
<feature type="sequence variant" id="VAR_007752" description="In DDS.">
    <original>D</original>
    <variation>G</variation>
    <location>
        <position position="396"/>
    </location>
</feature>
<feature type="sequence variant" id="VAR_007751" description="In DDS and NPHS4." evidence="8 42 43">
    <original>D</original>
    <variation>N</variation>
    <location>
        <position position="396"/>
    </location>
</feature>
<feature type="sequence variant" id="VAR_043809" description="In DDS." evidence="5">
    <original>D</original>
    <variation>Y</variation>
    <location>
        <position position="396"/>
    </location>
</feature>
<feature type="sequence variant" id="VAR_043810" description="In NPHS4." evidence="16 27">
    <original>H</original>
    <variation>P</variation>
    <location>
        <position position="397"/>
    </location>
</feature>
<feature type="sequence variant" id="VAR_015062" description="In DDS." evidence="34 42">
    <original>L</original>
    <variation>P</variation>
    <location>
        <position position="398"/>
    </location>
</feature>
<feature type="sequence variant" id="VAR_043811" description="In DDS." evidence="32">
    <original>H</original>
    <variation>Y</variation>
    <location>
        <position position="401"/>
    </location>
</feature>
<feature type="sequence variant" id="VAR_043812" description="In DDS." evidence="18">
    <original>H</original>
    <variation>R</variation>
    <location>
        <position position="405"/>
    </location>
</feature>
<feature type="mutagenesis site" description="Abolishes sumoylation; when associated with R-177." evidence="20">
    <original>K</original>
    <variation>R</variation>
    <location>
        <position position="73"/>
    </location>
</feature>
<feature type="mutagenesis site" description="Abolishes sumoylation; when associated with R-77." evidence="20">
    <original>K</original>
    <variation>R</variation>
    <location>
        <position position="177"/>
    </location>
</feature>
<feature type="mutagenesis site" description="Reduced RNA binding." evidence="25">
    <original>H</original>
    <variation>A</variation>
    <location>
        <position position="343"/>
    </location>
</feature>
<feature type="mutagenesis site" description="Strongly reduced binding of DNA and RNA." evidence="25">
    <original>R</original>
    <variation>A</variation>
    <location>
        <position position="366"/>
    </location>
</feature>
<feature type="mutagenesis site" description="Strongly reduced binding of DNA and RNA." evidence="25">
    <original>R</original>
    <variation>A</variation>
    <location>
        <position position="372"/>
    </location>
</feature>
<feature type="mutagenesis site" description="Strongly reduced binding of DNA and RNA." evidence="25">
    <original>R</original>
    <variation>A</variation>
    <variation>S</variation>
    <location>
        <position position="394"/>
    </location>
</feature>
<feature type="mutagenesis site" description="Reduced RNA binding." evidence="25">
    <original>H</original>
    <variation>A</variation>
    <location>
        <position position="434"/>
    </location>
</feature>
<feature type="sequence conflict" description="In Ref. 8; AAH32861." evidence="48" ref="8">
    <original>I</original>
    <variation>M</variation>
    <location>
        <position position="288"/>
    </location>
</feature>
<feature type="sequence conflict" description="In Ref. 9; AAA36810 and 10; AAB33443." evidence="48" ref="9 10">
    <original>S</original>
    <variation>F</variation>
    <location>
        <position position="365"/>
    </location>
</feature>
<feature type="sequence conflict" description="In Ref. 3; CAA43819." evidence="48" ref="3">
    <original>T</original>
    <variation>A</variation>
    <location>
        <position position="387"/>
    </location>
</feature>
<feature type="strand" evidence="52">
    <location>
        <begin position="322"/>
        <end position="324"/>
    </location>
</feature>
<feature type="turn" evidence="53">
    <location>
        <begin position="328"/>
        <end position="330"/>
    </location>
</feature>
<feature type="strand" evidence="51">
    <location>
        <begin position="333"/>
        <end position="336"/>
    </location>
</feature>
<feature type="helix" evidence="51">
    <location>
        <begin position="337"/>
        <end position="348"/>
    </location>
</feature>
<feature type="strand" evidence="55">
    <location>
        <begin position="352"/>
        <end position="354"/>
    </location>
</feature>
<feature type="strand" evidence="53">
    <location>
        <begin position="357"/>
        <end position="359"/>
    </location>
</feature>
<feature type="strand" evidence="50">
    <location>
        <begin position="363"/>
        <end position="366"/>
    </location>
</feature>
<feature type="helix" evidence="50">
    <location>
        <begin position="367"/>
        <end position="378"/>
    </location>
</feature>
<feature type="turn" evidence="50">
    <location>
        <begin position="386"/>
        <end position="388"/>
    </location>
</feature>
<feature type="strand" evidence="50">
    <location>
        <begin position="391"/>
        <end position="393"/>
    </location>
</feature>
<feature type="helix" evidence="50">
    <location>
        <begin position="395"/>
        <end position="401"/>
    </location>
</feature>
<feature type="helix" evidence="50">
    <location>
        <begin position="403"/>
        <end position="406"/>
    </location>
</feature>
<feature type="strand" evidence="54">
    <location>
        <begin position="418"/>
        <end position="420"/>
    </location>
</feature>
<feature type="strand" evidence="50">
    <location>
        <begin position="424"/>
        <end position="427"/>
    </location>
</feature>
<feature type="helix" evidence="50">
    <location>
        <begin position="428"/>
        <end position="438"/>
    </location>
</feature>
<organism>
    <name type="scientific">Homo sapiens</name>
    <name type="common">Human</name>
    <dbReference type="NCBI Taxonomy" id="9606"/>
    <lineage>
        <taxon>Eukaryota</taxon>
        <taxon>Metazoa</taxon>
        <taxon>Chordata</taxon>
        <taxon>Craniata</taxon>
        <taxon>Vertebrata</taxon>
        <taxon>Euteleostomi</taxon>
        <taxon>Mammalia</taxon>
        <taxon>Eutheria</taxon>
        <taxon>Euarchontoglires</taxon>
        <taxon>Primates</taxon>
        <taxon>Haplorrhini</taxon>
        <taxon>Catarrhini</taxon>
        <taxon>Hominidae</taxon>
        <taxon>Homo</taxon>
    </lineage>
</organism>
<reference key="1">
    <citation type="journal article" date="1990" name="Nature">
        <title>Homozygous deletion in Wilms tumours of a zinc-finger gene identified by chromosome jumping.</title>
        <authorList>
            <person name="Gessler M."/>
            <person name="Poustka A."/>
            <person name="Cavenee W."/>
            <person name="Neve R.L."/>
            <person name="Orkin S.H."/>
            <person name="Bruns G.A.P."/>
        </authorList>
    </citation>
    <scope>NUCLEOTIDE SEQUENCE [MRNA] (ISOFORM 7)</scope>
    <source>
        <tissue>Fetal kidney</tissue>
    </source>
</reference>
<reference key="2">
    <citation type="journal article" date="1991" name="Proc. Natl. Acad. Sci. U.S.A.">
        <title>Alternative splicing and genomic structure of the Wilms tumor gene WT1.</title>
        <authorList>
            <person name="Haber D.A."/>
            <person name="Sohn R.L."/>
            <person name="Buckler A.J."/>
            <person name="Pelletier J."/>
            <person name="Call K.M."/>
            <person name="Housman D.E."/>
        </authorList>
    </citation>
    <scope>NUCLEOTIDE SEQUENCE [GENOMIC DNA]</scope>
    <scope>ALTERNATIVE SPLICING (ISOFORMS 1; 2; 3 AND 4)</scope>
    <source>
        <tissue>Placenta</tissue>
    </source>
</reference>
<reference key="3">
    <citation type="journal article" date="1992" name="Genomics">
        <title>The genomic organization and expression of the WT1 gene.</title>
        <authorList>
            <person name="Gessler M."/>
            <person name="Konig A."/>
            <person name="Bruns G.A.P."/>
        </authorList>
    </citation>
    <scope>NUCLEOTIDE SEQUENCE [GENOMIC DNA]</scope>
    <scope>ALTERNATIVE SPLICING (ISOFORM 4)</scope>
</reference>
<reference key="4">
    <citation type="journal article" date="2004" name="Nat. Genet.">
        <title>Complete sequencing and characterization of 21,243 full-length human cDNAs.</title>
        <authorList>
            <person name="Ota T."/>
            <person name="Suzuki Y."/>
            <person name="Nishikawa T."/>
            <person name="Otsuki T."/>
            <person name="Sugiyama T."/>
            <person name="Irie R."/>
            <person name="Wakamatsu A."/>
            <person name="Hayashi K."/>
            <person name="Sato H."/>
            <person name="Nagai K."/>
            <person name="Kimura K."/>
            <person name="Makita H."/>
            <person name="Sekine M."/>
            <person name="Obayashi M."/>
            <person name="Nishi T."/>
            <person name="Shibahara T."/>
            <person name="Tanaka T."/>
            <person name="Ishii S."/>
            <person name="Yamamoto J."/>
            <person name="Saito K."/>
            <person name="Kawai Y."/>
            <person name="Isono Y."/>
            <person name="Nakamura Y."/>
            <person name="Nagahari K."/>
            <person name="Murakami K."/>
            <person name="Yasuda T."/>
            <person name="Iwayanagi T."/>
            <person name="Wagatsuma M."/>
            <person name="Shiratori A."/>
            <person name="Sudo H."/>
            <person name="Hosoiri T."/>
            <person name="Kaku Y."/>
            <person name="Kodaira H."/>
            <person name="Kondo H."/>
            <person name="Sugawara M."/>
            <person name="Takahashi M."/>
            <person name="Kanda K."/>
            <person name="Yokoi T."/>
            <person name="Furuya T."/>
            <person name="Kikkawa E."/>
            <person name="Omura Y."/>
            <person name="Abe K."/>
            <person name="Kamihara K."/>
            <person name="Katsuta N."/>
            <person name="Sato K."/>
            <person name="Tanikawa M."/>
            <person name="Yamazaki M."/>
            <person name="Ninomiya K."/>
            <person name="Ishibashi T."/>
            <person name="Yamashita H."/>
            <person name="Murakawa K."/>
            <person name="Fujimori K."/>
            <person name="Tanai H."/>
            <person name="Kimata M."/>
            <person name="Watanabe M."/>
            <person name="Hiraoka S."/>
            <person name="Chiba Y."/>
            <person name="Ishida S."/>
            <person name="Ono Y."/>
            <person name="Takiguchi S."/>
            <person name="Watanabe S."/>
            <person name="Yosida M."/>
            <person name="Hotuta T."/>
            <person name="Kusano J."/>
            <person name="Kanehori K."/>
            <person name="Takahashi-Fujii A."/>
            <person name="Hara H."/>
            <person name="Tanase T.-O."/>
            <person name="Nomura Y."/>
            <person name="Togiya S."/>
            <person name="Komai F."/>
            <person name="Hara R."/>
            <person name="Takeuchi K."/>
            <person name="Arita M."/>
            <person name="Imose N."/>
            <person name="Musashino K."/>
            <person name="Yuuki H."/>
            <person name="Oshima A."/>
            <person name="Sasaki N."/>
            <person name="Aotsuka S."/>
            <person name="Yoshikawa Y."/>
            <person name="Matsunawa H."/>
            <person name="Ichihara T."/>
            <person name="Shiohata N."/>
            <person name="Sano S."/>
            <person name="Moriya S."/>
            <person name="Momiyama H."/>
            <person name="Satoh N."/>
            <person name="Takami S."/>
            <person name="Terashima Y."/>
            <person name="Suzuki O."/>
            <person name="Nakagawa S."/>
            <person name="Senoh A."/>
            <person name="Mizoguchi H."/>
            <person name="Goto Y."/>
            <person name="Shimizu F."/>
            <person name="Wakebe H."/>
            <person name="Hishigaki H."/>
            <person name="Watanabe T."/>
            <person name="Sugiyama A."/>
            <person name="Takemoto M."/>
            <person name="Kawakami B."/>
            <person name="Yamazaki M."/>
            <person name="Watanabe K."/>
            <person name="Kumagai A."/>
            <person name="Itakura S."/>
            <person name="Fukuzumi Y."/>
            <person name="Fujimori Y."/>
            <person name="Komiyama M."/>
            <person name="Tashiro H."/>
            <person name="Tanigami A."/>
            <person name="Fujiwara T."/>
            <person name="Ono T."/>
            <person name="Yamada K."/>
            <person name="Fujii Y."/>
            <person name="Ozaki K."/>
            <person name="Hirao M."/>
            <person name="Ohmori Y."/>
            <person name="Kawabata A."/>
            <person name="Hikiji T."/>
            <person name="Kobatake N."/>
            <person name="Inagaki H."/>
            <person name="Ikema Y."/>
            <person name="Okamoto S."/>
            <person name="Okitani R."/>
            <person name="Kawakami T."/>
            <person name="Noguchi S."/>
            <person name="Itoh T."/>
            <person name="Shigeta K."/>
            <person name="Senba T."/>
            <person name="Matsumura K."/>
            <person name="Nakajima Y."/>
            <person name="Mizuno T."/>
            <person name="Morinaga M."/>
            <person name="Sasaki M."/>
            <person name="Togashi T."/>
            <person name="Oyama M."/>
            <person name="Hata H."/>
            <person name="Watanabe M."/>
            <person name="Komatsu T."/>
            <person name="Mizushima-Sugano J."/>
            <person name="Satoh T."/>
            <person name="Shirai Y."/>
            <person name="Takahashi Y."/>
            <person name="Nakagawa K."/>
            <person name="Okumura K."/>
            <person name="Nagase T."/>
            <person name="Nomura N."/>
            <person name="Kikuchi H."/>
            <person name="Masuho Y."/>
            <person name="Yamashita R."/>
            <person name="Nakai K."/>
            <person name="Yada T."/>
            <person name="Nakamura Y."/>
            <person name="Ohara O."/>
            <person name="Isogai T."/>
            <person name="Sugano S."/>
        </authorList>
    </citation>
    <scope>NUCLEOTIDE SEQUENCE [LARGE SCALE MRNA] (ISOFORMS 4 AND 9)</scope>
    <source>
        <tissue>Placenta</tissue>
        <tissue>Testis</tissue>
    </source>
</reference>
<reference key="5">
    <citation type="submission" date="2003-02" db="EMBL/GenBank/DDBJ databases">
        <authorList>
            <consortium name="NIEHS SNPs program"/>
        </authorList>
    </citation>
    <scope>NUCLEOTIDE SEQUENCE [GENOMIC DNA]</scope>
    <scope>ALTERNATIVE SPLICING (ISOFORM 1)</scope>
</reference>
<reference key="6">
    <citation type="journal article" date="2006" name="Nature">
        <title>Human chromosome 11 DNA sequence and analysis including novel gene identification.</title>
        <authorList>
            <person name="Taylor T.D."/>
            <person name="Noguchi H."/>
            <person name="Totoki Y."/>
            <person name="Toyoda A."/>
            <person name="Kuroki Y."/>
            <person name="Dewar K."/>
            <person name="Lloyd C."/>
            <person name="Itoh T."/>
            <person name="Takeda T."/>
            <person name="Kim D.-W."/>
            <person name="She X."/>
            <person name="Barlow K.F."/>
            <person name="Bloom T."/>
            <person name="Bruford E."/>
            <person name="Chang J.L."/>
            <person name="Cuomo C.A."/>
            <person name="Eichler E."/>
            <person name="FitzGerald M.G."/>
            <person name="Jaffe D.B."/>
            <person name="LaButti K."/>
            <person name="Nicol R."/>
            <person name="Park H.-S."/>
            <person name="Seaman C."/>
            <person name="Sougnez C."/>
            <person name="Yang X."/>
            <person name="Zimmer A.R."/>
            <person name="Zody M.C."/>
            <person name="Birren B.W."/>
            <person name="Nusbaum C."/>
            <person name="Fujiyama A."/>
            <person name="Hattori M."/>
            <person name="Rogers J."/>
            <person name="Lander E.S."/>
            <person name="Sakaki Y."/>
        </authorList>
    </citation>
    <scope>NUCLEOTIDE SEQUENCE [LARGE SCALE GENOMIC DNA]</scope>
</reference>
<reference key="7">
    <citation type="submission" date="2005-09" db="EMBL/GenBank/DDBJ databases">
        <authorList>
            <person name="Mural R.J."/>
            <person name="Istrail S."/>
            <person name="Sutton G.G."/>
            <person name="Florea L."/>
            <person name="Halpern A.L."/>
            <person name="Mobarry C.M."/>
            <person name="Lippert R."/>
            <person name="Walenz B."/>
            <person name="Shatkay H."/>
            <person name="Dew I."/>
            <person name="Miller J.R."/>
            <person name="Flanigan M.J."/>
            <person name="Edwards N.J."/>
            <person name="Bolanos R."/>
            <person name="Fasulo D."/>
            <person name="Halldorsson B.V."/>
            <person name="Hannenhalli S."/>
            <person name="Turner R."/>
            <person name="Yooseph S."/>
            <person name="Lu F."/>
            <person name="Nusskern D.R."/>
            <person name="Shue B.C."/>
            <person name="Zheng X.H."/>
            <person name="Zhong F."/>
            <person name="Delcher A.L."/>
            <person name="Huson D.H."/>
            <person name="Kravitz S.A."/>
            <person name="Mouchard L."/>
            <person name="Reinert K."/>
            <person name="Remington K.A."/>
            <person name="Clark A.G."/>
            <person name="Waterman M.S."/>
            <person name="Eichler E.E."/>
            <person name="Adams M.D."/>
            <person name="Hunkapiller M.W."/>
            <person name="Myers E.W."/>
            <person name="Venter J.C."/>
        </authorList>
    </citation>
    <scope>NUCLEOTIDE SEQUENCE [LARGE SCALE GENOMIC DNA]</scope>
</reference>
<reference key="8">
    <citation type="journal article" date="2004" name="Genome Res.">
        <title>The status, quality, and expansion of the NIH full-length cDNA project: the Mammalian Gene Collection (MGC).</title>
        <authorList>
            <consortium name="The MGC Project Team"/>
        </authorList>
    </citation>
    <scope>NUCLEOTIDE SEQUENCE [LARGE SCALE MRNA] (ISOFORM 6)</scope>
    <source>
        <tissue>Testis</tissue>
    </source>
</reference>
<reference key="9">
    <citation type="journal article" date="1990" name="Cell">
        <title>Isolation and characterization of a zinc finger polypeptide gene at the human chromosome 11 Wilms' tumor locus.</title>
        <authorList>
            <person name="Call K.M."/>
            <person name="Glaser T."/>
            <person name="Ito C.Y."/>
            <person name="Buckler A.J."/>
            <person name="Pelletier J."/>
            <person name="Haber D.A."/>
            <person name="Rose E.A."/>
            <person name="Kral A."/>
            <person name="Yeger H."/>
            <person name="Lewis W.H."/>
            <person name="Jones C."/>
            <person name="Housman D.E."/>
        </authorList>
    </citation>
    <scope>NUCLEOTIDE SEQUENCE [MRNA] OF 85-449 (ISOFORM 2)</scope>
</reference>
<reference key="10">
    <citation type="journal article" date="1995" name="Nucleic Acids Res.">
        <title>High affinity binding sites for the Wilms' tumour suppressor protein WT1.</title>
        <authorList>
            <person name="Hamilton T.B."/>
            <person name="Barilla K.C."/>
            <person name="Romaniuk P.J."/>
        </authorList>
    </citation>
    <scope>NUCLEOTIDE SEQUENCE [MRNA] OF 301-449 (ISOFORMS 2/4/6)</scope>
    <scope>FUNCTION</scope>
    <source>
        <tissue>Fetal kidney</tissue>
    </source>
</reference>
<reference key="11">
    <citation type="journal article" date="1991" name="Cell">
        <title>Germline mutations in the Wilms' tumor suppressor gene are associated with abnormal urogenital development in Denys-Drash syndrome.</title>
        <authorList>
            <person name="Pelletier J."/>
            <person name="Bruening W."/>
            <person name="Kashtan C.E."/>
            <person name="Mauer S.M."/>
            <person name="Manivel J.C."/>
            <person name="Striegel J.E."/>
            <person name="Houghton D.C."/>
            <person name="Junien C."/>
            <person name="Habib R."/>
            <person name="Fouser L."/>
            <person name="Fine R.N."/>
            <person name="Silverman B.L."/>
            <person name="Haber D.A."/>
            <person name="Housman D.E."/>
        </authorList>
    </citation>
    <scope>NUCLEOTIDE SEQUENCE [GENOMIC DNA] OF 385-405</scope>
    <scope>VARIANTS DDS</scope>
</reference>
<reference key="12">
    <citation type="journal article" date="1992" name="Nat. Genet.">
        <title>Germline intronic and exonic mutations in the Wilms' tumour gene (WT1) affecting urogenital development.</title>
        <authorList>
            <person name="Bruening W."/>
            <person name="Bardeesy N."/>
            <person name="Silverman B.L."/>
            <person name="Cohn R.A."/>
            <person name="Machin G.A."/>
            <person name="Aronson A.J."/>
            <person name="Housman D."/>
            <person name="Pelletier J."/>
        </authorList>
    </citation>
    <scope>NUCLEOTIDE SEQUENCE [GENOMIC DNA] OF 385-405</scope>
    <scope>VARIANTS DDS TYR-330; PRO-394 AND TRP-394</scope>
</reference>
<reference key="13">
    <citation type="journal article" date="1991" name="Mol. Cell. Biol.">
        <title>Isolation, characterization, and expression of the murine Wilms' tumor gene (WT1) during kidney development.</title>
        <authorList>
            <person name="Buckler A.J."/>
            <person name="Pelletier J."/>
            <person name="Haber D.A."/>
            <person name="Glaser T."/>
            <person name="Housman D.E."/>
        </authorList>
    </citation>
    <scope>IDENTIFICATION OF START CODON</scope>
    <scope>ALTERNATIVE SPLICING</scope>
</reference>
<reference key="14">
    <citation type="journal article" date="1994" name="Genes Dev.">
        <title>RNA editing in the Wilms' tumor susceptibility gene, WT1.</title>
        <authorList>
            <person name="Sharma P.M."/>
            <person name="Bowman M."/>
            <person name="Madden S.L."/>
            <person name="Rauscher F.J. III"/>
            <person name="Sukumar S."/>
        </authorList>
    </citation>
    <scope>RNA EDITING OF POSITION 281</scope>
</reference>
<reference key="15">
    <citation type="journal article" date="1996" name="J. Biol. Chem.">
        <title>A non-AUG translational initiation event generates novel WT1 isoforms.</title>
        <authorList>
            <person name="Bruening W."/>
            <person name="Pelletier J."/>
        </authorList>
    </citation>
    <scope>ALTERNATIVE INITIATION</scope>
    <scope>ALTERNATIVE SPLICING (ISOFORMS 7 AND 8)</scope>
</reference>
<reference key="16">
    <citation type="journal article" date="2000" name="Hum. Mol. Genet.">
        <title>Identification of WTAP, a novel Wilms' tumour 1-associating protein.</title>
        <authorList>
            <person name="Little N.A."/>
            <person name="Hastie N.D."/>
            <person name="Davies R.C."/>
        </authorList>
    </citation>
    <scope>INTERACTION WITH WTAP</scope>
</reference>
<reference key="17">
    <citation type="journal article" date="2002" name="J. Biol. Chem.">
        <title>Inhibition of Wilms tumor 1 transactivation by bone marrow zinc finger 2, a novel transcriptional repressor.</title>
        <authorList>
            <person name="Lee T.H."/>
            <person name="Lwu S."/>
            <person name="Kim J."/>
            <person name="Pelletier J."/>
        </authorList>
    </citation>
    <scope>INTERACTION WITH ZNF224</scope>
</reference>
<reference key="18">
    <citation type="journal article" date="2003" name="Oncogene">
        <title>Transcriptional activity of testis-determining factor SRY is modulated by the Wilms' tumor 1 gene product, WT1.</title>
        <authorList>
            <person name="Matsuzawa-Watanabe Y."/>
            <person name="Inoue J."/>
            <person name="Semba K."/>
        </authorList>
    </citation>
    <scope>INTERACTION WITH SRY</scope>
</reference>
<reference key="19">
    <citation type="journal article" date="1992" name="New Biol.">
        <title>WT1: a novel tumor suppressor gene inactivated in Wilms' tumor.</title>
        <authorList>
            <person name="Haber D.A."/>
            <person name="Buckler A.J."/>
        </authorList>
    </citation>
    <scope>REVIEW</scope>
</reference>
<reference key="20">
    <citation type="journal article" date="1993" name="FASEB J.">
        <title>The WT1 Wilms tumor gene product: a developmentally regulated transcription factor in the kidney that functions as a tumor suppressor.</title>
        <authorList>
            <person name="Rauscher F.J. III"/>
        </authorList>
    </citation>
    <scope>REVIEW</scope>
</reference>
<reference key="21">
    <citation type="journal article" date="1991" name="Nature">
        <title>WT1 mutations contribute to abnormal genital system development and hereditary Wilms' tumour.</title>
        <authorList>
            <person name="Pelletier J."/>
            <person name="Bruening W."/>
            <person name="Li F.P."/>
            <person name="Haber D.A."/>
            <person name="Glaser T."/>
            <person name="Housman D.E."/>
        </authorList>
    </citation>
    <scope>INVOLVEMENT IN WILMS TUMOR</scope>
</reference>
<reference key="22">
    <citation type="journal article" date="2007" name="Leukemia">
        <title>A tumor suppressor and oncogene: the WT1 story.</title>
        <authorList>
            <person name="Yang L."/>
            <person name="Han Y."/>
            <person name="Suarez Saiz F."/>
            <person name="Minden M.D."/>
        </authorList>
    </citation>
    <scope>REVIEW</scope>
</reference>
<reference key="23">
    <citation type="journal article" date="2004" name="Cancer Res.">
        <title>SUMO-1 modification of the Wilms' tumor suppressor WT1.</title>
        <authorList>
            <person name="Smolen G.A."/>
            <person name="Vassileva M.T."/>
            <person name="Wells J."/>
            <person name="Matunis M.J."/>
            <person name="Haber D.A."/>
        </authorList>
    </citation>
    <scope>SUBCELLULAR LOCATION</scope>
    <scope>MUTAGENESIS OF LYS-73 AND LYS-177</scope>
    <scope>SUMOYLATION AT LYS-73 AND LYS-177</scope>
</reference>
<reference key="24">
    <citation type="journal article" date="2006" name="Exp. Cell Res.">
        <title>WT1 interacts with the splicing protein RBM4 and regulates its ability to modulate alternative splicing in vivo.</title>
        <authorList>
            <person name="Markus M.A."/>
            <person name="Heinrich B."/>
            <person name="Raitskin O."/>
            <person name="Adams D.J."/>
            <person name="Mangs H."/>
            <person name="Goy C."/>
            <person name="Ladomery M."/>
            <person name="Sperling R."/>
            <person name="Stamm S."/>
            <person name="Morris B.J."/>
        </authorList>
    </citation>
    <scope>INTERACTION WITH RBM4</scope>
    <scope>SUBCELLULAR LOCATION</scope>
    <scope>FUNCTION</scope>
</reference>
<reference key="25">
    <citation type="journal article" date="2009" name="Biochemistry">
        <title>Contribution of individual amino acids to the RNA binding activity of the Wilms' tumor suppressor protein WT1.</title>
        <authorList>
            <person name="Weiss T.C."/>
            <person name="Romaniuk P.J."/>
        </authorList>
    </citation>
    <scope>FUNCTION</scope>
    <scope>MUTAGENESIS OF HIS-343; ARG-366; ARG-372; ARG-394 AND HIS-434</scope>
</reference>
<reference key="26">
    <citation type="journal article" date="2009" name="Proc. Natl. Acad. Sci. U.S.A.">
        <title>The tumor suppressor WTX shuttles to the nucleus and modulates WT1 activity.</title>
        <authorList>
            <person name="Rivera M.N."/>
            <person name="Kim W.J."/>
            <person name="Wells J."/>
            <person name="Stone A."/>
            <person name="Burger A."/>
            <person name="Coffman E.J."/>
            <person name="Zhang J."/>
            <person name="Haber D.A."/>
        </authorList>
    </citation>
    <scope>INTERACTION WITH AMER1</scope>
    <scope>FUNCTION</scope>
</reference>
<reference key="27">
    <citation type="journal article" date="2017" name="Nat. Struct. Mol. Biol.">
        <title>Site-specific mapping of the human SUMO proteome reveals co-modification with phosphorylation.</title>
        <authorList>
            <person name="Hendriks I.A."/>
            <person name="Lyon D."/>
            <person name="Young C."/>
            <person name="Jensen L.J."/>
            <person name="Vertegaal A.C."/>
            <person name="Nielsen M.L."/>
        </authorList>
    </citation>
    <scope>SUMOYLATION [LARGE SCALE ANALYSIS] AT LYS-444</scope>
    <scope>IDENTIFICATION BY MASS SPECTROMETRY [LARGE SCALE ANALYSIS]</scope>
</reference>
<reference key="28">
    <citation type="journal article" date="2020" name="Cell. Mol. Life Sci.">
        <title>The evolution of the 9aaTAD domain in Sp2 proteins: inactivation with valines and intron reservoirs.</title>
        <authorList>
            <person name="Piskacek M."/>
            <person name="Havelka M."/>
            <person name="Jendruchova K."/>
            <person name="Knight A."/>
            <person name="Keegan L.P."/>
        </authorList>
    </citation>
    <scope>9AATAD MOTIF</scope>
</reference>
<reference key="29">
    <citation type="journal article" date="2004" name="Biochemistry">
        <title>Why zinc fingers prefer zinc: ligand-field symmetry and the hidden thermodynamics of metal ion selectivity.</title>
        <authorList>
            <person name="Lachenmann M.J."/>
            <person name="Ladbury J.E."/>
            <person name="Dong J."/>
            <person name="Huang K."/>
            <person name="Carey P."/>
            <person name="Weiss M.A."/>
        </authorList>
    </citation>
    <scope>STRUCTURE BY NMR OF 381-407 IN COMPLEX WITH ZINC IONS</scope>
</reference>
<reference key="30">
    <citation type="journal article" date="2007" name="J. Mol. Biol.">
        <title>Structure of the Wilms tumor suppressor protein zinc finger domain bound to DNA.</title>
        <authorList>
            <person name="Stoll R."/>
            <person name="Lee B.M."/>
            <person name="Debler E.W."/>
            <person name="Laity J.H."/>
            <person name="Wilson I.A."/>
            <person name="Dyson H.J."/>
            <person name="Wright P.E."/>
        </authorList>
    </citation>
    <scope>STRUCTURE BY NMR OF 318-438 IN COMPLEX WITH DNA AND ZINC IONS (ISOFORM 4)</scope>
    <scope>X-RAY CRYSTALLOGRAPHY (3.15 ANGSTROMS) OF 318-438 IN COMPLEX WITH DNA AND ZINC IONS</scope>
    <scope>FUNCTION</scope>
</reference>
<reference key="31">
    <citation type="journal article" date="2014" name="Genes Dev.">
        <title>Wilms tumor protein recognizes 5-carboxylcytosine within a specific DNA sequence.</title>
        <authorList>
            <person name="Hashimoto H."/>
            <person name="Olanrewaju Y.O."/>
            <person name="Zheng Y."/>
            <person name="Wilson G.G."/>
            <person name="Zhang X."/>
            <person name="Cheng X."/>
        </authorList>
    </citation>
    <scope>X-RAY CRYSTALLOGRAPHY (1.54 ANGSTROMS) OF 350-440 IN COMPLEX WITH ZINC AND TARGET DNA</scope>
    <scope>FUNCTION</scope>
    <scope>DOMAIN</scope>
</reference>
<reference key="32">
    <citation type="journal article" date="1992" name="Proc. Natl. Acad. Sci. U.S.A.">
        <title>Zinc finger point mutations within the WT1 gene in Wilms tumor patients.</title>
        <authorList>
            <person name="Little M.H."/>
            <person name="Prosser J."/>
            <person name="Condie A."/>
            <person name="Smith P.J."/>
            <person name="van Heyningen V."/>
            <person name="Hastie N.D."/>
        </authorList>
    </citation>
    <scope>VARIANT WT1 CYS-366</scope>
</reference>
<reference key="33">
    <citation type="journal article" date="1992" name="Hum. Mol. Genet.">
        <title>Constitutional mutations in the WT1 gene in patients with Denys-Drash syndrome.</title>
        <authorList>
            <person name="Baird P.N."/>
            <person name="Santos A."/>
            <person name="Groves N."/>
            <person name="Jadresic L."/>
            <person name="Cowell J.K."/>
        </authorList>
    </citation>
    <scope>VARIANTS DDS</scope>
</reference>
<reference key="34">
    <citation type="journal article" date="1993" name="Hum. Mol. Genet.">
        <title>Evidence that WT1 mutations in Denys-Drash syndrome patients may act in a dominant-negative fashion.</title>
        <authorList>
            <person name="Little M.H."/>
            <person name="Williamson K.A."/>
            <person name="Mannens M."/>
            <person name="Kelsey A."/>
            <person name="Gosden C."/>
            <person name="Hastie N.D."/>
            <person name="van Heyningen V."/>
        </authorList>
    </citation>
    <scope>VARIANTS DDS</scope>
</reference>
<reference key="35">
    <citation type="journal article" date="1993" name="Hum. Mol. Genet.">
        <title>A novel zinc finger mutation in a patient with Denys-Drash syndrome.</title>
        <authorList>
            <person name="Baird P.N."/>
            <person name="Cowell J.K."/>
        </authorList>
    </citation>
    <scope>VARIANT DDS TYR-401</scope>
</reference>
<reference key="36">
    <citation type="journal article" date="1993" name="J. Inherit. Metab. Dis.">
        <title>Molecular analysis of two Japanese cases of Denys-Drash syndrome.</title>
        <authorList>
            <person name="Tsuda M."/>
            <person name="Sakiyama T."/>
            <person name="Kitagawa T."/>
            <person name="Watanabe S."/>
            <person name="Watanabe T."/>
            <person name="Takahashi S."/>
            <person name="Kawaguchi H."/>
            <person name="Ito K."/>
        </authorList>
    </citation>
    <scope>VARIANTS DDS TRP-394 AND PRO-398</scope>
</reference>
<reference key="37">
    <citation type="journal article" date="1993" name="J. Med. Genet.">
        <title>Mutational screening of the Wilms's tumour gene, WT1, in males with genital abnormalities.</title>
        <authorList>
            <person name="Clarkson P.A."/>
            <person name="Davies H.R."/>
            <person name="Williams D.M."/>
            <person name="Chaudhary R."/>
            <person name="Hughes I.A."/>
            <person name="Patterson M.N."/>
        </authorList>
    </citation>
    <scope>VARIANTS DDS TYR-360 AND TRP-394</scope>
</reference>
<reference key="38">
    <citation type="journal article" date="1993" name="Nat. Genet.">
        <title>The Wilms tumour gene WT1 is expressed in murine mesoderm-derived tissues and mutated in a human mesothelioma.</title>
        <authorList>
            <person name="Park S."/>
            <person name="Schalling M."/>
            <person name="Bernard A."/>
            <person name="Maheswaran S."/>
            <person name="Shipley G.C."/>
            <person name="Roberts D."/>
            <person name="Fletcher J."/>
            <person name="Shipman R."/>
            <person name="Rheinwald J."/>
            <person name="Demetri G."/>
            <person name="Griffin J."/>
            <person name="Minden M."/>
            <person name="Housman D.E."/>
            <person name="Haber D.A."/>
        </authorList>
    </citation>
    <scope>VARIANT GLY-273</scope>
    <scope>INVOLVEMENT IN MESOM</scope>
</reference>
<reference key="39">
    <citation type="journal article" date="1994" name="Hum. Genet.">
        <title>WT1 mutations in patients with Denys-Drash syndrome: a novel mutation in exon 8 and paternal allele origin.</title>
        <authorList>
            <person name="Nordenskjold A."/>
            <person name="Friedman E."/>
            <person name="Anvret M."/>
        </authorList>
    </citation>
    <scope>VARIANT DDS ARG-377</scope>
</reference>
<reference key="40">
    <citation type="journal article" date="1996" name="Acta Paediatr. Jpn. Overseas Ed.">
        <title>A newly identified exonic mutation of the WT1 gene in a patient with Denys-Drash syndrome.</title>
        <authorList>
            <person name="Tsuda M."/>
            <person name="Sakiyama T."/>
            <person name="Owada M."/>
            <person name="Chiba Y."/>
        </authorList>
    </citation>
    <scope>VARIANT DDS LEU-366</scope>
</reference>
<reference key="41">
    <citation type="journal article" date="1996" name="Hum. Hered.">
        <title>A novel mutation H373Y in the Wilms' tumor suppressor gene, WT1, associated with Denys-Drash syndrome.</title>
        <authorList>
            <person name="Ghahremani M."/>
            <person name="Chan C.B."/>
            <person name="Bistritzer T."/>
            <person name="Aladjem M.M."/>
            <person name="Tieder M."/>
            <person name="Pelletier J."/>
        </authorList>
    </citation>
    <scope>VARIANT DDS TYR-373</scope>
</reference>
<reference key="42">
    <citation type="journal article" date="1997" name="Proc. Natl. Acad. Sci. U.S.A.">
        <title>Correlation of germ-line mutations and two-hit inactivation of the WT1 gene with Wilms tumors of stromal-predominant histology.</title>
        <authorList>
            <person name="Schumacher V."/>
            <person name="Schneider S."/>
            <person name="Figge A."/>
            <person name="Wildhardt G."/>
            <person name="Harms D."/>
            <person name="Schmidt D."/>
            <person name="Weirich A."/>
            <person name="Ludwig R."/>
            <person name="Royer-Pokora B."/>
        </authorList>
    </citation>
    <scope>VARIANTS WT1 SER-181 AND ALA-253</scope>
</reference>
<reference key="43">
    <citation type="journal article" date="1998" name="Am. J. Hum. Genet.">
        <title>Identification of constitutional WT1 mutations, in patients with isolated diffuse mesangial sclerosis, and analysis of genotype/phenotype correlations by use of a computerized mutation database.</title>
        <authorList>
            <person name="Jeanpierre C."/>
            <person name="Denamur E."/>
            <person name="Henry I."/>
            <person name="Cabanis M.-O."/>
            <person name="Luce S."/>
            <person name="Cecille A."/>
            <person name="Elion J."/>
            <person name="Peuchmaur M."/>
            <person name="Loirat C."/>
            <person name="Niaudet P."/>
            <person name="Gubler M.-C."/>
            <person name="Junien C."/>
        </authorList>
    </citation>
    <scope>VARIANTS NPHS4 TYR-377; LEU-383 AND ASN-396</scope>
    <scope>VARIANTS DDS CYS-366; GLN-394; TRP-394 AND PRO-398</scope>
    <scope>VARIANT WT1 ASN-223</scope>
</reference>
<reference key="44">
    <citation type="journal article" date="1998" name="J. Med. Genet.">
        <title>Do intronic mutations affecting splicing of WT1 exon 9 cause Frasier syndrome?</title>
        <authorList>
            <person name="Kikuchi H."/>
            <person name="Takata A."/>
            <person name="Akasaka Y."/>
            <person name="Fukuzawa R."/>
            <person name="Yoneyama H."/>
            <person name="Kurosawa Y."/>
            <person name="Honda M."/>
            <person name="Kamiyama Y."/>
            <person name="Hata J."/>
        </authorList>
    </citation>
    <scope>VARIANTS DDS TYR-355; HIS-366 AND ARG-385</scope>
</reference>
<reference key="45">
    <citation type="journal article" date="1998" name="Kidney Int.">
        <title>Spectrum of early onset nephrotic syndrome associated with WT1 missense mutations.</title>
        <authorList>
            <person name="Schumacher V."/>
            <person name="Schaerer K."/>
            <person name="Wuehl E."/>
            <person name="Altrogge H."/>
            <person name="Bonzel K.-E."/>
            <person name="Guschmann M."/>
            <person name="Neuhaus T.J."/>
            <person name="Pollastro R.M."/>
            <person name="Kuwertz-Broeking E."/>
            <person name="Bulla M."/>
            <person name="Tondera A.-M."/>
            <person name="Mundel P."/>
            <person name="Helmchen U."/>
            <person name="Waldherr R."/>
            <person name="Weirich A."/>
            <person name="Royer-Pokora B."/>
        </authorList>
    </citation>
    <scope>VARIANTS NPHS4 LEU-364; HIS-366; CYS-379; ARG-385; GLN-394; TRP-394 AND ASN-396</scope>
</reference>
<reference key="46">
    <citation type="journal article" date="1999" name="Hum. Mutat.">
        <title>Exon 9 mutations in the WT1 gene, without influencing KTS splice isoforms, are also responsible for Frasier syndrome.</title>
        <authorList>
            <person name="Kohsaka T."/>
            <person name="Tagawa M."/>
            <person name="Takekoshi Y."/>
            <person name="Yanagisawa H."/>
            <person name="Tadokoro K."/>
            <person name="Yamada M."/>
        </authorList>
    </citation>
    <scope>VARIANT FS LEU-392</scope>
</reference>
<reference key="47">
    <citation type="journal article" date="2000" name="Hum. Mutat.">
        <title>Novel WT1 exon 9 mutation (D396Y) in a patient with early onset Denys Drash syndrome.</title>
        <authorList>
            <person name="Little M."/>
            <person name="Carman G."/>
            <person name="Donaldson E."/>
        </authorList>
    </citation>
    <scope>VARIANT DDS TYR-396</scope>
</reference>
<reference key="48">
    <citation type="journal article" date="2000" name="J. Med. Genet.">
        <title>Constitutional WT1 correlate with clinical features in children with progressive nephropathy.</title>
        <authorList>
            <person name="Takata A."/>
            <person name="Kikuchi H."/>
            <person name="Fukuzawa R."/>
            <person name="Ito S."/>
            <person name="Honda M."/>
            <person name="Hata J."/>
        </authorList>
    </citation>
    <scope>VARIANTS DDS ARG-342; TYR-355; HIS-366; ARG-385; PHE-388; TRP-394 AND ASN-396</scope>
    <scope>VARIANT NPHS4 GLN-312</scope>
</reference>
<reference key="49">
    <citation type="journal article" date="2000" name="J. Urol.">
        <title>A novel missense mutation of the WT1 gene causing Denys-Drash syndrome with exceptionally mild renal manifestations.</title>
        <authorList>
            <person name="Ohta S."/>
            <person name="Ozawa T."/>
            <person name="Izumino K."/>
            <person name="Sakuragawa N."/>
            <person name="Fuse H."/>
        </authorList>
    </citation>
    <scope>VARIANT DDS PRO-369</scope>
</reference>
<reference key="50">
    <citation type="journal article" date="2001" name="Pediatr. Nephrol.">
        <title>Novel WT1 mutation (C388Y) in a female child with Denys-Drash syndrome.</title>
        <authorList>
            <person name="Swiatecka-Urban A."/>
            <person name="Mokrzycki M.H."/>
            <person name="Kaskel F."/>
            <person name="Da Silva F."/>
            <person name="Denamur E."/>
        </authorList>
    </citation>
    <scope>VARIANT DDS TYR-388</scope>
</reference>
<reference key="51">
    <citation type="journal article" date="2004" name="Am. J. Med. Genet. A">
        <title>Twenty-four new cases of WT1 germline mutations and review of the literature: genotype/phenotype correlations for Wilms tumor development.</title>
        <authorList>
            <person name="Royer-Pokora B."/>
            <person name="Beier M."/>
            <person name="Henzler M."/>
            <person name="Alam R."/>
            <person name="Schumacher V."/>
            <person name="Weirich A."/>
            <person name="Huff V."/>
        </authorList>
    </citation>
    <scope>VARIANTS WT1 SER-181; GLY-355; CYS-366; HIS-366; GLN-373; TRP-394 AND LEU-394</scope>
</reference>
<reference key="52">
    <citation type="journal article" date="2004" name="Eur. J. Hum. Genet.">
        <title>Mutation analysis of five candidate genes in Chinese patients with hypospadias.</title>
        <authorList>
            <person name="Wang Y."/>
            <person name="Li Q."/>
            <person name="Xu J."/>
            <person name="Liu Q."/>
            <person name="Wang W."/>
            <person name="Lin Y."/>
            <person name="Ma F."/>
            <person name="Chen T."/>
            <person name="Li S."/>
            <person name="Shen Y."/>
        </authorList>
    </citation>
    <scope>VARIANT THR-131</scope>
</reference>
<reference key="53">
    <citation type="journal article" date="2004" name="Kidney Int.">
        <title>Prevalence of WT1 mutations in a large cohort of patients with steroid-resistant and steroid-sensitive nephrotic syndrome.</title>
        <authorList>
            <consortium name="Members of the APN study group"/>
            <person name="Ruf R.G."/>
            <person name="Schultheiss M."/>
            <person name="Lichtenberger A."/>
            <person name="Karle S.M."/>
            <person name="Zalewski I."/>
            <person name="Mucha B."/>
            <person name="Everding A.S."/>
            <person name="Neuhaus T."/>
            <person name="Patzer L."/>
            <person name="Plank C."/>
            <person name="Haas J.P."/>
            <person name="Ozaltin F."/>
            <person name="Imm A."/>
            <person name="Fuchshuber A."/>
            <person name="Bakkaloglu A."/>
            <person name="Hildebrandt F."/>
        </authorList>
    </citation>
    <scope>VARIANTS NPHS4 ARG-388 AND PRO-397</scope>
</reference>
<reference key="54">
    <citation type="journal article" date="2004" name="Pediatr. Nephrol.">
        <title>A novel mutation of WT1 exon 9 in a patient with Denys-Drash syndrome and pyloric stenosis.</title>
        <authorList>
            <person name="Hu M."/>
            <person name="Craig J."/>
            <person name="Howard N."/>
            <person name="Kan A."/>
            <person name="Chaitow J."/>
            <person name="Little D."/>
            <person name="Alexander S.I."/>
        </authorList>
    </citation>
    <scope>VARIANT DDS ARG-405</scope>
</reference>
<reference key="55">
    <citation type="journal article" date="2007" name="Am. J. Med. Genet. A">
        <title>WT1 mutations in Meacham syndrome suggest a coelomic mesothelial origin of the cardiac and diaphragmatic malformations.</title>
        <authorList>
            <person name="Suri M."/>
            <person name="Kelehan P."/>
            <person name="O'neill D."/>
            <person name="Vadeyar S."/>
            <person name="Grant J."/>
            <person name="Ahmed S.F."/>
            <person name="Tolmie J."/>
            <person name="McCann E."/>
            <person name="Lam W."/>
            <person name="Smith S."/>
            <person name="FitzPatrick D."/>
            <person name="Hastie N.D."/>
            <person name="Reardon W."/>
        </authorList>
    </citation>
    <scope>VARIANTS MEACHS CYS-366 AND TRP-394</scope>
</reference>
<reference key="56">
    <citation type="journal article" date="2010" name="Clin. J. Am. Soc. Nephrol.">
        <title>Immunosuppression and renal outcome in congenital and pediatric steroid-resistant nephrotic syndrome.</title>
        <authorList>
            <person name="Buescher A.K."/>
            <person name="Kranz B."/>
            <person name="Buescher R."/>
            <person name="Hildebrandt F."/>
            <person name="Dworniczak B."/>
            <person name="Pennekamp P."/>
            <person name="Kuwertz-Broeking E."/>
            <person name="Wingen A.M."/>
            <person name="John U."/>
            <person name="Kemper M."/>
            <person name="Monnens L."/>
            <person name="Hoyer P.F."/>
            <person name="Weber S."/>
            <person name="Konrad M."/>
        </authorList>
    </citation>
    <scope>VARIANTS NPHS4 ARG-388; GLN-394; TRP-394 AND PRO-397</scope>
</reference>
<dbReference type="EMBL" id="X51630">
    <property type="protein sequence ID" value="CAA35956.1"/>
    <property type="status" value="ALT_SEQ"/>
    <property type="molecule type" value="mRNA"/>
</dbReference>
<dbReference type="EMBL" id="M80232">
    <property type="protein sequence ID" value="AAA61299.1"/>
    <property type="molecule type" value="Genomic_DNA"/>
</dbReference>
<dbReference type="EMBL" id="M80217">
    <property type="protein sequence ID" value="AAA61299.1"/>
    <property type="status" value="JOINED"/>
    <property type="molecule type" value="Genomic_DNA"/>
</dbReference>
<dbReference type="EMBL" id="M80218">
    <property type="protein sequence ID" value="AAA61299.1"/>
    <property type="status" value="JOINED"/>
    <property type="molecule type" value="Genomic_DNA"/>
</dbReference>
<dbReference type="EMBL" id="M80219">
    <property type="protein sequence ID" value="AAA61299.1"/>
    <property type="status" value="JOINED"/>
    <property type="molecule type" value="Genomic_DNA"/>
</dbReference>
<dbReference type="EMBL" id="M80220">
    <property type="protein sequence ID" value="AAA61299.1"/>
    <property type="status" value="JOINED"/>
    <property type="molecule type" value="Genomic_DNA"/>
</dbReference>
<dbReference type="EMBL" id="M80221">
    <property type="protein sequence ID" value="AAA61299.1"/>
    <property type="status" value="JOINED"/>
    <property type="molecule type" value="Genomic_DNA"/>
</dbReference>
<dbReference type="EMBL" id="M80228">
    <property type="protein sequence ID" value="AAA61299.1"/>
    <property type="status" value="JOINED"/>
    <property type="molecule type" value="Genomic_DNA"/>
</dbReference>
<dbReference type="EMBL" id="M80229">
    <property type="protein sequence ID" value="AAA61299.1"/>
    <property type="status" value="JOINED"/>
    <property type="molecule type" value="Genomic_DNA"/>
</dbReference>
<dbReference type="EMBL" id="M80231">
    <property type="protein sequence ID" value="AAA61299.1"/>
    <property type="status" value="JOINED"/>
    <property type="molecule type" value="Genomic_DNA"/>
</dbReference>
<dbReference type="EMBL" id="X61631">
    <property type="protein sequence ID" value="CAA43819.1"/>
    <property type="molecule type" value="Genomic_DNA"/>
</dbReference>
<dbReference type="EMBL" id="X61632">
    <property type="protein sequence ID" value="CAA43819.1"/>
    <property type="status" value="JOINED"/>
    <property type="molecule type" value="Genomic_DNA"/>
</dbReference>
<dbReference type="EMBL" id="X61633">
    <property type="protein sequence ID" value="CAA43819.1"/>
    <property type="status" value="JOINED"/>
    <property type="molecule type" value="Genomic_DNA"/>
</dbReference>
<dbReference type="EMBL" id="X61634">
    <property type="protein sequence ID" value="CAA43819.1"/>
    <property type="status" value="JOINED"/>
    <property type="molecule type" value="Genomic_DNA"/>
</dbReference>
<dbReference type="EMBL" id="X61635">
    <property type="protein sequence ID" value="CAA43819.1"/>
    <property type="status" value="JOINED"/>
    <property type="molecule type" value="Genomic_DNA"/>
</dbReference>
<dbReference type="EMBL" id="X61636">
    <property type="protein sequence ID" value="CAA43819.1"/>
    <property type="status" value="JOINED"/>
    <property type="molecule type" value="Genomic_DNA"/>
</dbReference>
<dbReference type="EMBL" id="X61637">
    <property type="protein sequence ID" value="CAA43819.1"/>
    <property type="status" value="JOINED"/>
    <property type="molecule type" value="Genomic_DNA"/>
</dbReference>
<dbReference type="EMBL" id="X61638">
    <property type="protein sequence ID" value="CAA43819.1"/>
    <property type="status" value="JOINED"/>
    <property type="molecule type" value="Genomic_DNA"/>
</dbReference>
<dbReference type="EMBL" id="AK093168">
    <property type="protein sequence ID" value="BAG52667.1"/>
    <property type="molecule type" value="mRNA"/>
</dbReference>
<dbReference type="EMBL" id="AK291736">
    <property type="protein sequence ID" value="BAF84425.1"/>
    <property type="molecule type" value="mRNA"/>
</dbReference>
<dbReference type="EMBL" id="AY245105">
    <property type="protein sequence ID" value="AAO61088.1"/>
    <property type="molecule type" value="Genomic_DNA"/>
</dbReference>
<dbReference type="EMBL" id="AL049692">
    <property type="protein sequence ID" value="CAC39220.3"/>
    <property type="status" value="ALT_INIT"/>
    <property type="molecule type" value="Genomic_DNA"/>
</dbReference>
<dbReference type="EMBL" id="AL049692">
    <property type="protein sequence ID" value="CAI95758.2"/>
    <property type="status" value="ALT_INIT"/>
    <property type="molecule type" value="Genomic_DNA"/>
</dbReference>
<dbReference type="EMBL" id="AL049692">
    <property type="protein sequence ID" value="CAI95759.2"/>
    <property type="status" value="ALT_INIT"/>
    <property type="molecule type" value="Genomic_DNA"/>
</dbReference>
<dbReference type="EMBL" id="AL049692">
    <property type="protein sequence ID" value="CAI95760.1"/>
    <property type="molecule type" value="Genomic_DNA"/>
</dbReference>
<dbReference type="EMBL" id="CH471064">
    <property type="protein sequence ID" value="EAW68220.1"/>
    <property type="molecule type" value="Genomic_DNA"/>
</dbReference>
<dbReference type="EMBL" id="CH471064">
    <property type="protein sequence ID" value="EAW68223.1"/>
    <property type="molecule type" value="Genomic_DNA"/>
</dbReference>
<dbReference type="EMBL" id="CH471064">
    <property type="protein sequence ID" value="EAW68224.1"/>
    <property type="molecule type" value="Genomic_DNA"/>
</dbReference>
<dbReference type="EMBL" id="BC032861">
    <property type="protein sequence ID" value="AAH32861.1"/>
    <property type="molecule type" value="mRNA"/>
</dbReference>
<dbReference type="EMBL" id="M30393">
    <property type="protein sequence ID" value="AAA36810.1"/>
    <property type="molecule type" value="mRNA"/>
</dbReference>
<dbReference type="EMBL" id="S75264">
    <property type="protein sequence ID" value="AAB33443.1"/>
    <property type="status" value="ALT_SEQ"/>
    <property type="molecule type" value="mRNA"/>
</dbReference>
<dbReference type="EMBL" id="S61515">
    <property type="protein sequence ID" value="AAB20110.1"/>
    <property type="molecule type" value="Genomic_DNA"/>
</dbReference>
<dbReference type="EMBL" id="S61522">
    <property type="protein sequence ID" value="AAB20111.1"/>
    <property type="molecule type" value="Genomic_DNA"/>
</dbReference>
<dbReference type="EMBL" id="S61524">
    <property type="protein sequence ID" value="AAB20112.1"/>
    <property type="molecule type" value="Genomic_DNA"/>
</dbReference>
<dbReference type="EMBL" id="S60755">
    <property type="protein sequence ID" value="AAC60605.1"/>
    <property type="molecule type" value="Genomic_DNA"/>
</dbReference>
<dbReference type="CCDS" id="CCDS55750.1">
    <molecule id="P19544-9"/>
</dbReference>
<dbReference type="CCDS" id="CCDS55751.1">
    <molecule id="P19544-6"/>
</dbReference>
<dbReference type="CCDS" id="CCDS7878.3">
    <molecule id="P19544-7"/>
</dbReference>
<dbReference type="PIR" id="A38080">
    <property type="entry name" value="A38080"/>
</dbReference>
<dbReference type="RefSeq" id="NP_000369.3">
    <property type="nucleotide sequence ID" value="NM_000378.4"/>
</dbReference>
<dbReference type="RefSeq" id="NP_001185480.1">
    <molecule id="P19544-6"/>
    <property type="nucleotide sequence ID" value="NM_001198551.2"/>
</dbReference>
<dbReference type="RefSeq" id="NP_001185481.1">
    <molecule id="P19544-9"/>
    <property type="nucleotide sequence ID" value="NM_001198552.2"/>
</dbReference>
<dbReference type="RefSeq" id="NP_001393974.1">
    <molecule id="P19544-8"/>
    <property type="nucleotide sequence ID" value="NM_001407045.1"/>
</dbReference>
<dbReference type="RefSeq" id="NP_001415960.1">
    <molecule id="P19544-1"/>
    <property type="nucleotide sequence ID" value="NM_001429031.1"/>
</dbReference>
<dbReference type="RefSeq" id="NP_001415961.1">
    <molecule id="P19544-4"/>
    <property type="nucleotide sequence ID" value="NM_001429032.1"/>
</dbReference>
<dbReference type="RefSeq" id="NP_001415962.1">
    <molecule id="P19544-3"/>
    <property type="nucleotide sequence ID" value="NM_001429033.1"/>
</dbReference>
<dbReference type="RefSeq" id="NP_001415963.1">
    <molecule id="P19544-2"/>
    <property type="nucleotide sequence ID" value="NM_001429034.1"/>
</dbReference>
<dbReference type="RefSeq" id="NP_077742.2">
    <property type="nucleotide sequence ID" value="NM_024424.3"/>
</dbReference>
<dbReference type="RefSeq" id="NP_077744.3">
    <molecule id="P19544-7"/>
    <property type="nucleotide sequence ID" value="NM_024426.4"/>
</dbReference>
<dbReference type="PDB" id="1XF7">
    <property type="method" value="NMR"/>
    <property type="chains" value="A=381-407"/>
</dbReference>
<dbReference type="PDB" id="2JP9">
    <property type="method" value="NMR"/>
    <property type="chains" value="A=318-438"/>
</dbReference>
<dbReference type="PDB" id="2JPA">
    <property type="method" value="NMR"/>
    <property type="chains" value="A=318-438"/>
</dbReference>
<dbReference type="PDB" id="2PRT">
    <property type="method" value="X-ray"/>
    <property type="resolution" value="3.15 A"/>
    <property type="chains" value="A=318-438"/>
</dbReference>
<dbReference type="PDB" id="3HPJ">
    <property type="method" value="X-ray"/>
    <property type="resolution" value="2.00 A"/>
    <property type="chains" value="C/F=126-134"/>
</dbReference>
<dbReference type="PDB" id="3MYJ">
    <property type="method" value="X-ray"/>
    <property type="resolution" value="1.89 A"/>
    <property type="chains" value="C/F=126-134"/>
</dbReference>
<dbReference type="PDB" id="4R2E">
    <property type="method" value="X-ray"/>
    <property type="resolution" value="1.84 A"/>
    <property type="chains" value="A=350-440"/>
</dbReference>
<dbReference type="PDB" id="4R2P">
    <property type="method" value="X-ray"/>
    <property type="resolution" value="1.79 A"/>
    <property type="chains" value="A=350-440"/>
</dbReference>
<dbReference type="PDB" id="4R2Q">
    <property type="method" value="X-ray"/>
    <property type="resolution" value="1.54 A"/>
    <property type="chains" value="A=350-440"/>
</dbReference>
<dbReference type="PDB" id="4R2R">
    <property type="method" value="X-ray"/>
    <property type="resolution" value="2.09 A"/>
    <property type="chains" value="A=350-440"/>
</dbReference>
<dbReference type="PDB" id="4R2S">
    <property type="method" value="X-ray"/>
    <property type="resolution" value="2.49 A"/>
    <property type="chains" value="A=350-440"/>
</dbReference>
<dbReference type="PDB" id="4WUU">
    <property type="method" value="X-ray"/>
    <property type="resolution" value="3.05 A"/>
    <property type="chains" value="C=126-134"/>
</dbReference>
<dbReference type="PDB" id="5KL2">
    <property type="method" value="X-ray"/>
    <property type="resolution" value="1.69 A"/>
    <property type="chains" value="A=350-440"/>
</dbReference>
<dbReference type="PDB" id="5KL3">
    <property type="method" value="X-ray"/>
    <property type="resolution" value="1.45 A"/>
    <property type="chains" value="A=350-440"/>
</dbReference>
<dbReference type="PDB" id="5KL4">
    <property type="method" value="X-ray"/>
    <property type="resolution" value="1.78 A"/>
    <property type="chains" value="A/D=350-440"/>
</dbReference>
<dbReference type="PDB" id="5KL5">
    <property type="method" value="X-ray"/>
    <property type="resolution" value="2.29 A"/>
    <property type="chains" value="A=350-440"/>
</dbReference>
<dbReference type="PDB" id="5KL6">
    <property type="method" value="X-ray"/>
    <property type="resolution" value="1.64 A"/>
    <property type="chains" value="A=350-440"/>
</dbReference>
<dbReference type="PDB" id="5KL7">
    <property type="method" value="X-ray"/>
    <property type="resolution" value="1.58 A"/>
    <property type="chains" value="A=350-440"/>
</dbReference>
<dbReference type="PDB" id="6B0O">
    <property type="method" value="X-ray"/>
    <property type="resolution" value="1.55 A"/>
    <property type="chains" value="A/D=321-440"/>
</dbReference>
<dbReference type="PDB" id="6B0P">
    <property type="method" value="X-ray"/>
    <property type="resolution" value="2.08 A"/>
    <property type="chains" value="A/D=321-440"/>
</dbReference>
<dbReference type="PDB" id="6B0Q">
    <property type="method" value="X-ray"/>
    <property type="resolution" value="2.79 A"/>
    <property type="chains" value="A/D=321-440"/>
</dbReference>
<dbReference type="PDB" id="6B0R">
    <property type="method" value="X-ray"/>
    <property type="resolution" value="1.82 A"/>
    <property type="chains" value="A/D=321-440"/>
</dbReference>
<dbReference type="PDB" id="6BLW">
    <property type="method" value="X-ray"/>
    <property type="resolution" value="1.83 A"/>
    <property type="chains" value="A=319-440"/>
</dbReference>
<dbReference type="PDB" id="6RSY">
    <property type="method" value="X-ray"/>
    <property type="resolution" value="2.95 A"/>
    <property type="chains" value="C/H=126-134"/>
</dbReference>
<dbReference type="PDB" id="6WLH">
    <property type="method" value="NMR"/>
    <property type="chains" value="A=318-438"/>
</dbReference>
<dbReference type="PDB" id="7BBG">
    <property type="method" value="X-ray"/>
    <property type="resolution" value="2.64 A"/>
    <property type="chains" value="C=126-134"/>
</dbReference>
<dbReference type="PDB" id="8ISN">
    <property type="method" value="X-ray"/>
    <property type="resolution" value="2.48 A"/>
    <property type="chains" value="C/F=235-243"/>
</dbReference>
<dbReference type="PDBsum" id="1XF7"/>
<dbReference type="PDBsum" id="2JP9"/>
<dbReference type="PDBsum" id="2JPA"/>
<dbReference type="PDBsum" id="2PRT"/>
<dbReference type="PDBsum" id="3HPJ"/>
<dbReference type="PDBsum" id="3MYJ"/>
<dbReference type="PDBsum" id="4R2E"/>
<dbReference type="PDBsum" id="4R2P"/>
<dbReference type="PDBsum" id="4R2Q"/>
<dbReference type="PDBsum" id="4R2R"/>
<dbReference type="PDBsum" id="4R2S"/>
<dbReference type="PDBsum" id="4WUU"/>
<dbReference type="PDBsum" id="5KL2"/>
<dbReference type="PDBsum" id="5KL3"/>
<dbReference type="PDBsum" id="5KL4"/>
<dbReference type="PDBsum" id="5KL5"/>
<dbReference type="PDBsum" id="5KL6"/>
<dbReference type="PDBsum" id="5KL7"/>
<dbReference type="PDBsum" id="6B0O"/>
<dbReference type="PDBsum" id="6B0P"/>
<dbReference type="PDBsum" id="6B0Q"/>
<dbReference type="PDBsum" id="6B0R"/>
<dbReference type="PDBsum" id="6BLW"/>
<dbReference type="PDBsum" id="6RSY"/>
<dbReference type="PDBsum" id="6WLH"/>
<dbReference type="PDBsum" id="7BBG"/>
<dbReference type="PDBsum" id="8ISN"/>
<dbReference type="BMRB" id="P19544"/>
<dbReference type="SMR" id="P19544"/>
<dbReference type="BioGRID" id="113327">
    <property type="interactions" value="69"/>
</dbReference>
<dbReference type="FunCoup" id="P19544">
    <property type="interactions" value="2064"/>
</dbReference>
<dbReference type="IntAct" id="P19544">
    <property type="interactions" value="68"/>
</dbReference>
<dbReference type="MINT" id="P19544"/>
<dbReference type="STRING" id="9606.ENSP00000368370"/>
<dbReference type="ChEMBL" id="CHEMBL4662942"/>
<dbReference type="MoonProt" id="P19544"/>
<dbReference type="iPTMnet" id="P19544"/>
<dbReference type="PhosphoSitePlus" id="P19544"/>
<dbReference type="BioMuta" id="WT1"/>
<dbReference type="DMDM" id="139778"/>
<dbReference type="jPOST" id="P19544"/>
<dbReference type="MassIVE" id="P19544"/>
<dbReference type="PaxDb" id="9606-ENSP00000331327"/>
<dbReference type="PeptideAtlas" id="P19544"/>
<dbReference type="ProteomicsDB" id="53673">
    <molecule id="P19544-1"/>
</dbReference>
<dbReference type="ProteomicsDB" id="53674">
    <molecule id="P19544-2"/>
</dbReference>
<dbReference type="ProteomicsDB" id="53675">
    <molecule id="P19544-3"/>
</dbReference>
<dbReference type="ProteomicsDB" id="53676">
    <molecule id="P19544-4"/>
</dbReference>
<dbReference type="ProteomicsDB" id="53677">
    <molecule id="P19544-6"/>
</dbReference>
<dbReference type="ProteomicsDB" id="53678">
    <molecule id="P19544-7"/>
</dbReference>
<dbReference type="ProteomicsDB" id="53679">
    <molecule id="P19544-8"/>
</dbReference>
<dbReference type="ProteomicsDB" id="53680">
    <molecule id="P19544-9"/>
</dbReference>
<dbReference type="Pumba" id="P19544"/>
<dbReference type="ABCD" id="P19544">
    <property type="antibodies" value="1 sequenced antibody"/>
</dbReference>
<dbReference type="Antibodypedia" id="3523">
    <property type="antibodies" value="1212 antibodies from 45 providers"/>
</dbReference>
<dbReference type="DNASU" id="7490"/>
<dbReference type="Ensembl" id="ENST00000379079.8">
    <molecule id="P19544-6"/>
    <property type="protein sequence ID" value="ENSP00000368370.2"/>
    <property type="gene ID" value="ENSG00000184937.17"/>
</dbReference>
<dbReference type="Ensembl" id="ENST00000452863.10">
    <molecule id="P19544-7"/>
    <property type="protein sequence ID" value="ENSP00000415516.5"/>
    <property type="gene ID" value="ENSG00000184937.17"/>
</dbReference>
<dbReference type="Ensembl" id="ENST00000530998.5">
    <molecule id="P19544-9"/>
    <property type="protein sequence ID" value="ENSP00000435307.1"/>
    <property type="gene ID" value="ENSG00000184937.17"/>
</dbReference>
<dbReference type="Ensembl" id="ENST00000639563.4">
    <molecule id="P19544-8"/>
    <property type="protein sequence ID" value="ENSP00000492269.3"/>
    <property type="gene ID" value="ENSG00000184937.17"/>
</dbReference>
<dbReference type="Ensembl" id="ENST00000850606.1">
    <molecule id="P19544-2"/>
    <property type="protein sequence ID" value="ENSP00000520894.1"/>
    <property type="gene ID" value="ENSG00000184937.17"/>
</dbReference>
<dbReference type="Ensembl" id="ENST00000850608.1">
    <molecule id="P19544-4"/>
    <property type="protein sequence ID" value="ENSP00000520896.1"/>
    <property type="gene ID" value="ENSG00000184937.17"/>
</dbReference>
<dbReference type="Ensembl" id="ENST00000850609.1">
    <molecule id="P19544-3"/>
    <property type="protein sequence ID" value="ENSP00000520897.1"/>
    <property type="gene ID" value="ENSG00000184937.17"/>
</dbReference>
<dbReference type="Ensembl" id="ENST00000850610.1">
    <molecule id="P19544-2"/>
    <property type="protein sequence ID" value="ENSP00000520898.1"/>
    <property type="gene ID" value="ENSG00000184937.17"/>
</dbReference>
<dbReference type="GeneID" id="7490"/>
<dbReference type="KEGG" id="hsa:7490"/>
<dbReference type="MANE-Select" id="ENST00000452863.10">
    <molecule id="P19544-7"/>
    <property type="protein sequence ID" value="ENSP00000415516.5"/>
    <property type="RefSeq nucleotide sequence ID" value="NM_024426.6"/>
    <property type="RefSeq protein sequence ID" value="NP_077744.4"/>
</dbReference>
<dbReference type="UCSC" id="uc001mtl.3">
    <molecule id="P19544-1"/>
    <property type="organism name" value="human"/>
</dbReference>
<dbReference type="AGR" id="HGNC:12796"/>
<dbReference type="CTD" id="7490"/>
<dbReference type="DisGeNET" id="7490"/>
<dbReference type="GeneCards" id="WT1"/>
<dbReference type="GeneReviews" id="WT1"/>
<dbReference type="HGNC" id="HGNC:12796">
    <property type="gene designation" value="WT1"/>
</dbReference>
<dbReference type="HPA" id="ENSG00000184937">
    <property type="expression patterns" value="Tissue enhanced (endometrium, fallopian tube, ovary)"/>
</dbReference>
<dbReference type="MalaCards" id="WT1"/>
<dbReference type="MIM" id="136680">
    <property type="type" value="phenotype"/>
</dbReference>
<dbReference type="MIM" id="156240">
    <property type="type" value="phenotype"/>
</dbReference>
<dbReference type="MIM" id="194070">
    <property type="type" value="phenotype"/>
</dbReference>
<dbReference type="MIM" id="194080">
    <property type="type" value="phenotype"/>
</dbReference>
<dbReference type="MIM" id="256370">
    <property type="type" value="phenotype"/>
</dbReference>
<dbReference type="MIM" id="607102">
    <property type="type" value="gene"/>
</dbReference>
<dbReference type="MIM" id="608978">
    <property type="type" value="phenotype"/>
</dbReference>
<dbReference type="neXtProt" id="NX_P19544"/>
<dbReference type="OpenTargets" id="ENSG00000184937"/>
<dbReference type="Orphanet" id="242">
    <property type="disease" value="46,XY complete gonadal dysgenesis"/>
</dbReference>
<dbReference type="Orphanet" id="251510">
    <property type="disease" value="46,XY partial gonadal dysgenesis"/>
</dbReference>
<dbReference type="Orphanet" id="220">
    <property type="disease" value="Denys-Drash syndrome"/>
</dbReference>
<dbReference type="Orphanet" id="83469">
    <property type="disease" value="Desmoplastic small round cell tumor"/>
</dbReference>
<dbReference type="Orphanet" id="347">
    <property type="disease" value="Frasier syndrome"/>
</dbReference>
<dbReference type="Orphanet" id="656">
    <property type="disease" value="Hereditary steroid-resistant nephrotic syndrome"/>
</dbReference>
<dbReference type="Orphanet" id="3097">
    <property type="disease" value="Meacham syndrome"/>
</dbReference>
<dbReference type="Orphanet" id="654">
    <property type="disease" value="Nephroblastoma"/>
</dbReference>
<dbReference type="Orphanet" id="893">
    <property type="disease" value="WAGR syndrome"/>
</dbReference>
<dbReference type="PharmGKB" id="PA37395"/>
<dbReference type="VEuPathDB" id="HostDB:ENSG00000184937"/>
<dbReference type="eggNOG" id="KOG1721">
    <property type="taxonomic scope" value="Eukaryota"/>
</dbReference>
<dbReference type="GeneTree" id="ENSGT00940000156734"/>
<dbReference type="InParanoid" id="P19544"/>
<dbReference type="OMA" id="QARMFTN"/>
<dbReference type="OrthoDB" id="8922241at2759"/>
<dbReference type="PAN-GO" id="P19544">
    <property type="GO annotations" value="5 GO annotations based on evolutionary models"/>
</dbReference>
<dbReference type="PhylomeDB" id="P19544"/>
<dbReference type="PathwayCommons" id="P19544"/>
<dbReference type="Reactome" id="R-HSA-9690406">
    <property type="pathway name" value="Transcriptional regulation of testis differentiation"/>
</dbReference>
<dbReference type="Reactome" id="R-HSA-9831926">
    <property type="pathway name" value="Nephron development"/>
</dbReference>
<dbReference type="SignaLink" id="P19544"/>
<dbReference type="SIGNOR" id="P19544"/>
<dbReference type="BioGRID-ORCS" id="7490">
    <property type="hits" value="23 hits in 1196 CRISPR screens"/>
</dbReference>
<dbReference type="CD-CODE" id="804901D1">
    <property type="entry name" value="Nuclear speckle"/>
</dbReference>
<dbReference type="ChiTaRS" id="WT1">
    <property type="organism name" value="human"/>
</dbReference>
<dbReference type="EvolutionaryTrace" id="P19544"/>
<dbReference type="GeneWiki" id="WT1"/>
<dbReference type="GenomeRNAi" id="7490"/>
<dbReference type="Pharos" id="P19544">
    <property type="development level" value="Tbio"/>
</dbReference>
<dbReference type="PRO" id="PR:P19544"/>
<dbReference type="Proteomes" id="UP000005640">
    <property type="component" value="Chromosome 11"/>
</dbReference>
<dbReference type="RNAct" id="P19544">
    <property type="molecule type" value="protein"/>
</dbReference>
<dbReference type="Bgee" id="ENSG00000184937">
    <property type="expression patterns" value="Expressed in germinal epithelium of ovary and 128 other cell types or tissues"/>
</dbReference>
<dbReference type="ExpressionAtlas" id="P19544">
    <property type="expression patterns" value="baseline and differential"/>
</dbReference>
<dbReference type="GO" id="GO:0005737">
    <property type="term" value="C:cytoplasm"/>
    <property type="evidence" value="ECO:0000250"/>
    <property type="project" value="UniProtKB"/>
</dbReference>
<dbReference type="GO" id="GO:0005829">
    <property type="term" value="C:cytosol"/>
    <property type="evidence" value="ECO:0000314"/>
    <property type="project" value="HPA"/>
</dbReference>
<dbReference type="GO" id="GO:0016607">
    <property type="term" value="C:nuclear speck"/>
    <property type="evidence" value="ECO:0000314"/>
    <property type="project" value="UniProtKB"/>
</dbReference>
<dbReference type="GO" id="GO:0005730">
    <property type="term" value="C:nucleolus"/>
    <property type="evidence" value="ECO:0007669"/>
    <property type="project" value="UniProtKB-SubCell"/>
</dbReference>
<dbReference type="GO" id="GO:0005654">
    <property type="term" value="C:nucleoplasm"/>
    <property type="evidence" value="ECO:0000314"/>
    <property type="project" value="UniProtKB"/>
</dbReference>
<dbReference type="GO" id="GO:0005634">
    <property type="term" value="C:nucleus"/>
    <property type="evidence" value="ECO:0000314"/>
    <property type="project" value="UniProtKB"/>
</dbReference>
<dbReference type="GO" id="GO:0070742">
    <property type="term" value="F:C2H2 zinc finger domain binding"/>
    <property type="evidence" value="ECO:0000353"/>
    <property type="project" value="UniProtKB"/>
</dbReference>
<dbReference type="GO" id="GO:0001228">
    <property type="term" value="F:DNA-binding transcription activator activity, RNA polymerase II-specific"/>
    <property type="evidence" value="ECO:0000314"/>
    <property type="project" value="ARUK-UCL"/>
</dbReference>
<dbReference type="GO" id="GO:0003700">
    <property type="term" value="F:DNA-binding transcription factor activity"/>
    <property type="evidence" value="ECO:0000250"/>
    <property type="project" value="UniProtKB"/>
</dbReference>
<dbReference type="GO" id="GO:0000981">
    <property type="term" value="F:DNA-binding transcription factor activity, RNA polymerase II-specific"/>
    <property type="evidence" value="ECO:0000318"/>
    <property type="project" value="GO_Central"/>
</dbReference>
<dbReference type="GO" id="GO:0010385">
    <property type="term" value="F:double-stranded methylated DNA binding"/>
    <property type="evidence" value="ECO:0000314"/>
    <property type="project" value="UniProtKB"/>
</dbReference>
<dbReference type="GO" id="GO:0044729">
    <property type="term" value="F:hemi-methylated DNA-binding"/>
    <property type="evidence" value="ECO:0000314"/>
    <property type="project" value="UniProtKB"/>
</dbReference>
<dbReference type="GO" id="GO:0003723">
    <property type="term" value="F:RNA binding"/>
    <property type="evidence" value="ECO:0007669"/>
    <property type="project" value="UniProtKB-KW"/>
</dbReference>
<dbReference type="GO" id="GO:0000978">
    <property type="term" value="F:RNA polymerase II cis-regulatory region sequence-specific DNA binding"/>
    <property type="evidence" value="ECO:0000314"/>
    <property type="project" value="ARUK-UCL"/>
</dbReference>
<dbReference type="GO" id="GO:0043565">
    <property type="term" value="F:sequence-specific DNA binding"/>
    <property type="evidence" value="ECO:0000314"/>
    <property type="project" value="UniProtKB"/>
</dbReference>
<dbReference type="GO" id="GO:0000976">
    <property type="term" value="F:transcription cis-regulatory region binding"/>
    <property type="evidence" value="ECO:0000314"/>
    <property type="project" value="UniProtKB"/>
</dbReference>
<dbReference type="GO" id="GO:0008270">
    <property type="term" value="F:zinc ion binding"/>
    <property type="evidence" value="ECO:0000314"/>
    <property type="project" value="UniProtKB"/>
</dbReference>
<dbReference type="GO" id="GO:0035802">
    <property type="term" value="P:adrenal cortex formation"/>
    <property type="evidence" value="ECO:0000250"/>
    <property type="project" value="UniProtKB"/>
</dbReference>
<dbReference type="GO" id="GO:0030325">
    <property type="term" value="P:adrenal gland development"/>
    <property type="evidence" value="ECO:0000316"/>
    <property type="project" value="UniProtKB"/>
</dbReference>
<dbReference type="GO" id="GO:0001658">
    <property type="term" value="P:branching involved in ureteric bud morphogenesis"/>
    <property type="evidence" value="ECO:0000316"/>
    <property type="project" value="UniProtKB"/>
</dbReference>
<dbReference type="GO" id="GO:0043010">
    <property type="term" value="P:camera-type eye development"/>
    <property type="evidence" value="ECO:0000250"/>
    <property type="project" value="UniProtKB"/>
</dbReference>
<dbReference type="GO" id="GO:0060923">
    <property type="term" value="P:cardiac muscle cell fate commitment"/>
    <property type="evidence" value="ECO:0000250"/>
    <property type="project" value="BHF-UCL"/>
</dbReference>
<dbReference type="GO" id="GO:0071320">
    <property type="term" value="P:cellular response to cAMP"/>
    <property type="evidence" value="ECO:0000270"/>
    <property type="project" value="UniProtKB"/>
</dbReference>
<dbReference type="GO" id="GO:0071371">
    <property type="term" value="P:cellular response to gonadotropin stimulus"/>
    <property type="evidence" value="ECO:0000314"/>
    <property type="project" value="UniProtKB"/>
</dbReference>
<dbReference type="GO" id="GO:0060539">
    <property type="term" value="P:diaphragm development"/>
    <property type="evidence" value="ECO:0000250"/>
    <property type="project" value="UniProtKB"/>
</dbReference>
<dbReference type="GO" id="GO:0030855">
    <property type="term" value="P:epithelial cell differentiation"/>
    <property type="evidence" value="ECO:0000250"/>
    <property type="project" value="UniProtKB"/>
</dbReference>
<dbReference type="GO" id="GO:0007281">
    <property type="term" value="P:germ cell development"/>
    <property type="evidence" value="ECO:0000250"/>
    <property type="project" value="UniProtKB"/>
</dbReference>
<dbReference type="GO" id="GO:0032836">
    <property type="term" value="P:glomerular basement membrane development"/>
    <property type="evidence" value="ECO:0000315"/>
    <property type="project" value="UniProtKB"/>
</dbReference>
<dbReference type="GO" id="GO:0032835">
    <property type="term" value="P:glomerulus development"/>
    <property type="evidence" value="ECO:0000316"/>
    <property type="project" value="UniProtKB"/>
</dbReference>
<dbReference type="GO" id="GO:0008406">
    <property type="term" value="P:gonad development"/>
    <property type="evidence" value="ECO:0000250"/>
    <property type="project" value="UniProtKB"/>
</dbReference>
<dbReference type="GO" id="GO:0007507">
    <property type="term" value="P:heart development"/>
    <property type="evidence" value="ECO:0000316"/>
    <property type="project" value="UniProtKB"/>
</dbReference>
<dbReference type="GO" id="GO:0001822">
    <property type="term" value="P:kidney development"/>
    <property type="evidence" value="ECO:0000316"/>
    <property type="project" value="UniProtKB"/>
</dbReference>
<dbReference type="GO" id="GO:0030539">
    <property type="term" value="P:male genitalia development"/>
    <property type="evidence" value="ECO:0000250"/>
    <property type="project" value="UniProtKB"/>
</dbReference>
<dbReference type="GO" id="GO:0008584">
    <property type="term" value="P:male gonad development"/>
    <property type="evidence" value="ECO:0000270"/>
    <property type="project" value="UniProtKB"/>
</dbReference>
<dbReference type="GO" id="GO:0060231">
    <property type="term" value="P:mesenchymal to epithelial transition"/>
    <property type="evidence" value="ECO:0000250"/>
    <property type="project" value="UniProtKB"/>
</dbReference>
<dbReference type="GO" id="GO:0072207">
    <property type="term" value="P:metanephric epithelium development"/>
    <property type="evidence" value="ECO:0000270"/>
    <property type="project" value="UniProtKB"/>
</dbReference>
<dbReference type="GO" id="GO:0072075">
    <property type="term" value="P:metanephric mesenchyme development"/>
    <property type="evidence" value="ECO:0000250"/>
    <property type="project" value="UniProtKB"/>
</dbReference>
<dbReference type="GO" id="GO:0072284">
    <property type="term" value="P:metanephric S-shaped body morphogenesis"/>
    <property type="evidence" value="ECO:0000316"/>
    <property type="project" value="UniProtKB"/>
</dbReference>
<dbReference type="GO" id="GO:0043066">
    <property type="term" value="P:negative regulation of apoptotic process"/>
    <property type="evidence" value="ECO:0000316"/>
    <property type="project" value="UniProtKB"/>
</dbReference>
<dbReference type="GO" id="GO:0030308">
    <property type="term" value="P:negative regulation of cell growth"/>
    <property type="evidence" value="ECO:0000314"/>
    <property type="project" value="UniProtKB"/>
</dbReference>
<dbReference type="GO" id="GO:0008285">
    <property type="term" value="P:negative regulation of cell population proliferation"/>
    <property type="evidence" value="ECO:0000314"/>
    <property type="project" value="UniProtKB"/>
</dbReference>
<dbReference type="GO" id="GO:0045892">
    <property type="term" value="P:negative regulation of DNA-templated transcription"/>
    <property type="evidence" value="ECO:0000314"/>
    <property type="project" value="UniProtKB"/>
</dbReference>
<dbReference type="GO" id="GO:2000195">
    <property type="term" value="P:negative regulation of female gonad development"/>
    <property type="evidence" value="ECO:0000250"/>
    <property type="project" value="UniProtKB"/>
</dbReference>
<dbReference type="GO" id="GO:0044027">
    <property type="term" value="P:negative regulation of gene expression via chromosomal CpG island methylation"/>
    <property type="evidence" value="ECO:0000315"/>
    <property type="project" value="ARUK-UCL"/>
</dbReference>
<dbReference type="GO" id="GO:0072302">
    <property type="term" value="P:negative regulation of metanephric glomerular mesangial cell proliferation"/>
    <property type="evidence" value="ECO:0000250"/>
    <property type="project" value="UniProtKB"/>
</dbReference>
<dbReference type="GO" id="GO:0000122">
    <property type="term" value="P:negative regulation of transcription by RNA polymerase II"/>
    <property type="evidence" value="ECO:0000314"/>
    <property type="project" value="MGI"/>
</dbReference>
<dbReference type="GO" id="GO:0017148">
    <property type="term" value="P:negative regulation of translation"/>
    <property type="evidence" value="ECO:0000314"/>
    <property type="project" value="UniProtKB"/>
</dbReference>
<dbReference type="GO" id="GO:0072112">
    <property type="term" value="P:podocyte differentiation"/>
    <property type="evidence" value="ECO:0000250"/>
    <property type="project" value="UniProtKB"/>
</dbReference>
<dbReference type="GO" id="GO:0043065">
    <property type="term" value="P:positive regulation of apoptotic process"/>
    <property type="evidence" value="ECO:0000314"/>
    <property type="project" value="UniProtKB"/>
</dbReference>
<dbReference type="GO" id="GO:0045893">
    <property type="term" value="P:positive regulation of DNA-templated transcription"/>
    <property type="evidence" value="ECO:0000314"/>
    <property type="project" value="UniProtKB"/>
</dbReference>
<dbReference type="GO" id="GO:0010628">
    <property type="term" value="P:positive regulation of gene expression"/>
    <property type="evidence" value="ECO:0000315"/>
    <property type="project" value="ARUK-UCL"/>
</dbReference>
<dbReference type="GO" id="GO:0060421">
    <property type="term" value="P:positive regulation of heart growth"/>
    <property type="evidence" value="ECO:0000250"/>
    <property type="project" value="UniProtKB"/>
</dbReference>
<dbReference type="GO" id="GO:2000020">
    <property type="term" value="P:positive regulation of male gonad development"/>
    <property type="evidence" value="ECO:0000250"/>
    <property type="project" value="UniProtKB"/>
</dbReference>
<dbReference type="GO" id="GO:2001076">
    <property type="term" value="P:positive regulation of metanephric ureteric bud development"/>
    <property type="evidence" value="ECO:0000250"/>
    <property type="project" value="UniProtKB"/>
</dbReference>
<dbReference type="GO" id="GO:1902895">
    <property type="term" value="P:positive regulation of miRNA transcription"/>
    <property type="evidence" value="ECO:0000315"/>
    <property type="project" value="ARUK-UCL"/>
</dbReference>
<dbReference type="GO" id="GO:0045944">
    <property type="term" value="P:positive regulation of transcription by RNA polymerase II"/>
    <property type="evidence" value="ECO:0000314"/>
    <property type="project" value="ARUK-UCL"/>
</dbReference>
<dbReference type="GO" id="GO:0072166">
    <property type="term" value="P:posterior mesonephric tubule development"/>
    <property type="evidence" value="ECO:0000250"/>
    <property type="project" value="UniProtKB"/>
</dbReference>
<dbReference type="GO" id="GO:0003156">
    <property type="term" value="P:regulation of animal organ formation"/>
    <property type="evidence" value="ECO:0000250"/>
    <property type="project" value="UniProtKB"/>
</dbReference>
<dbReference type="GO" id="GO:0006355">
    <property type="term" value="P:regulation of DNA-templated transcription"/>
    <property type="evidence" value="ECO:0000250"/>
    <property type="project" value="UniProtKB"/>
</dbReference>
<dbReference type="GO" id="GO:0006357">
    <property type="term" value="P:regulation of transcription by RNA polymerase II"/>
    <property type="evidence" value="ECO:0000250"/>
    <property type="project" value="UniProtKB"/>
</dbReference>
<dbReference type="GO" id="GO:0008380">
    <property type="term" value="P:RNA splicing"/>
    <property type="evidence" value="ECO:0000250"/>
    <property type="project" value="UniProtKB"/>
</dbReference>
<dbReference type="GO" id="GO:0007530">
    <property type="term" value="P:sex determination"/>
    <property type="evidence" value="ECO:0000314"/>
    <property type="project" value="UniProtKB"/>
</dbReference>
<dbReference type="GO" id="GO:0007356">
    <property type="term" value="P:thorax and anterior abdomen determination"/>
    <property type="evidence" value="ECO:0000250"/>
    <property type="project" value="UniProtKB"/>
</dbReference>
<dbReference type="GO" id="GO:0009888">
    <property type="term" value="P:tissue development"/>
    <property type="evidence" value="ECO:0000250"/>
    <property type="project" value="UniProtKB"/>
</dbReference>
<dbReference type="GO" id="GO:0001657">
    <property type="term" value="P:ureteric bud development"/>
    <property type="evidence" value="ECO:0000250"/>
    <property type="project" value="UniProtKB"/>
</dbReference>
<dbReference type="GO" id="GO:0001570">
    <property type="term" value="P:vasculogenesis"/>
    <property type="evidence" value="ECO:0000250"/>
    <property type="project" value="UniProtKB"/>
</dbReference>
<dbReference type="GO" id="GO:0061032">
    <property type="term" value="P:visceral serous pericardium development"/>
    <property type="evidence" value="ECO:0000316"/>
    <property type="project" value="UniProtKB"/>
</dbReference>
<dbReference type="FunFam" id="3.30.160.60:FF:000018">
    <property type="entry name" value="Krueppel-like factor 15"/>
    <property type="match status" value="1"/>
</dbReference>
<dbReference type="FunFam" id="3.30.160.60:FF:000228">
    <property type="entry name" value="Wilms tumor 1-KTS isoform"/>
    <property type="match status" value="1"/>
</dbReference>
<dbReference type="FunFam" id="3.30.160.60:FF:000241">
    <property type="entry name" value="Wilms tumor 1-KTS isoform"/>
    <property type="match status" value="1"/>
</dbReference>
<dbReference type="FunFam" id="3.30.160.60:FF:000303">
    <property type="entry name" value="Zinc finger protein 41"/>
    <property type="match status" value="1"/>
</dbReference>
<dbReference type="Gene3D" id="3.30.160.60">
    <property type="entry name" value="Classic Zinc Finger"/>
    <property type="match status" value="4"/>
</dbReference>
<dbReference type="InterPro" id="IPR000976">
    <property type="entry name" value="Wilms_tumour_N"/>
</dbReference>
<dbReference type="InterPro" id="IPR036236">
    <property type="entry name" value="Znf_C2H2_sf"/>
</dbReference>
<dbReference type="InterPro" id="IPR013087">
    <property type="entry name" value="Znf_C2H2_type"/>
</dbReference>
<dbReference type="PANTHER" id="PTHR23235:SF65">
    <property type="entry name" value="KRUEPPEL-LIKE FACTOR 11"/>
    <property type="match status" value="1"/>
</dbReference>
<dbReference type="PANTHER" id="PTHR23235">
    <property type="entry name" value="KRUEPPEL-LIKE TRANSCRIPTION FACTOR"/>
    <property type="match status" value="1"/>
</dbReference>
<dbReference type="Pfam" id="PF02165">
    <property type="entry name" value="WT1"/>
    <property type="match status" value="1"/>
</dbReference>
<dbReference type="Pfam" id="PF00096">
    <property type="entry name" value="zf-C2H2"/>
    <property type="match status" value="2"/>
</dbReference>
<dbReference type="PRINTS" id="PR00049">
    <property type="entry name" value="WILMSTUMOUR"/>
</dbReference>
<dbReference type="SMART" id="SM00355">
    <property type="entry name" value="ZnF_C2H2"/>
    <property type="match status" value="4"/>
</dbReference>
<dbReference type="SUPFAM" id="SSF57667">
    <property type="entry name" value="beta-beta-alpha zinc fingers"/>
    <property type="match status" value="2"/>
</dbReference>
<dbReference type="PROSITE" id="PS00028">
    <property type="entry name" value="ZINC_FINGER_C2H2_1"/>
    <property type="match status" value="4"/>
</dbReference>
<dbReference type="PROSITE" id="PS50157">
    <property type="entry name" value="ZINC_FINGER_C2H2_2"/>
    <property type="match status" value="4"/>
</dbReference>
<sequence length="449" mass="49188">MGSDVRDLNALLPAVPSLGGGGGCALPVSGAAQWAPVLDFAPPGASAYGSLGGPAPPPAPPPPPPPPPHSFIKQEPSWGGAEPHEEQCLSAFTVHFSGQFTGTAGACRYGPFGPPPPSQASSGQARMFPNAPYLPSCLESQPAIRNQGYSTVTFDGTPSYGHTPSHHAAQFPNHSFKHEDPMGQQGSLGEQQYSVPPPVYGCHTPTDSCTGSQALLLRTPYSSDNLYQMTSQLECMTWNQMNLGATLKGVAAGSSSSVKWTEGQSNHSTGYESDNHTTPILCGAQYRIHTHGVFRGIQDVRRVPGVAPTLVRSASETSEKRPFMCAYPGCNKRYFKLSHLQMHSRKHTGEKPYQCDFKDCERRFSRSDQLKRHQRRHTGVKPFQCKTCQRKFSRSDHLKTHTRTHTGKTSEKPFSCRWPSCQKKFARSDELVRHHNMHQRNMTKLQLAL</sequence>
<accession>P19544</accession>
<accession>A8K6S1</accession>
<accession>B3KSA5</accession>
<accession>Q15881</accession>
<accession>Q16256</accession>
<accession>Q16575</accession>
<accession>Q4VXV4</accession>
<accession>Q4VXV5</accession>
<accession>Q4VXV6</accession>
<accession>Q8IYZ5</accession>
<gene>
    <name type="primary">WT1</name>
</gene>
<proteinExistence type="evidence at protein level"/>
<evidence type="ECO:0000250" key="1"/>
<evidence type="ECO:0000255" key="2">
    <source>
        <dbReference type="PROSITE-ProRule" id="PRU00042"/>
    </source>
</evidence>
<evidence type="ECO:0000256" key="3">
    <source>
        <dbReference type="SAM" id="MobiDB-lite"/>
    </source>
</evidence>
<evidence type="ECO:0000269" key="4">
    <source>
    </source>
</evidence>
<evidence type="ECO:0000269" key="5">
    <source>
    </source>
</evidence>
<evidence type="ECO:0000269" key="6">
    <source>
    </source>
</evidence>
<evidence type="ECO:0000269" key="7">
    <source>
    </source>
</evidence>
<evidence type="ECO:0000269" key="8">
    <source>
    </source>
</evidence>
<evidence type="ECO:0000269" key="9">
    <source>
    </source>
</evidence>
<evidence type="ECO:0000269" key="10">
    <source>
    </source>
</evidence>
<evidence type="ECO:0000269" key="11">
    <source>
    </source>
</evidence>
<evidence type="ECO:0000269" key="12">
    <source>
    </source>
</evidence>
<evidence type="ECO:0000269" key="13">
    <source>
    </source>
</evidence>
<evidence type="ECO:0000269" key="14">
    <source>
    </source>
</evidence>
<evidence type="ECO:0000269" key="15">
    <source>
    </source>
</evidence>
<evidence type="ECO:0000269" key="16">
    <source>
    </source>
</evidence>
<evidence type="ECO:0000269" key="17">
    <source>
    </source>
</evidence>
<evidence type="ECO:0000269" key="18">
    <source>
    </source>
</evidence>
<evidence type="ECO:0000269" key="19">
    <source>
    </source>
</evidence>
<evidence type="ECO:0000269" key="20">
    <source>
    </source>
</evidence>
<evidence type="ECO:0000269" key="21">
    <source>
    </source>
</evidence>
<evidence type="ECO:0000269" key="22">
    <source>
    </source>
</evidence>
<evidence type="ECO:0000269" key="23">
    <source>
    </source>
</evidence>
<evidence type="ECO:0000269" key="24">
    <source>
    </source>
</evidence>
<evidence type="ECO:0000269" key="25">
    <source>
    </source>
</evidence>
<evidence type="ECO:0000269" key="26">
    <source>
    </source>
</evidence>
<evidence type="ECO:0000269" key="27">
    <source>
    </source>
</evidence>
<evidence type="ECO:0000269" key="28">
    <source>
    </source>
</evidence>
<evidence type="ECO:0000269" key="29">
    <source>
    </source>
</evidence>
<evidence type="ECO:0000269" key="30">
    <source>
    </source>
</evidence>
<evidence type="ECO:0000269" key="31">
    <source>
    </source>
</evidence>
<evidence type="ECO:0000269" key="32">
    <source>
    </source>
</evidence>
<evidence type="ECO:0000269" key="33">
    <source>
    </source>
</evidence>
<evidence type="ECO:0000269" key="34">
    <source>
    </source>
</evidence>
<evidence type="ECO:0000269" key="35">
    <source>
    </source>
</evidence>
<evidence type="ECO:0000269" key="36">
    <source>
    </source>
</evidence>
<evidence type="ECO:0000269" key="37">
    <source>
    </source>
</evidence>
<evidence type="ECO:0000269" key="38">
    <source>
    </source>
</evidence>
<evidence type="ECO:0000269" key="39">
    <source>
    </source>
</evidence>
<evidence type="ECO:0000269" key="40">
    <source>
    </source>
</evidence>
<evidence type="ECO:0000269" key="41">
    <source>
    </source>
</evidence>
<evidence type="ECO:0000269" key="42">
    <source>
    </source>
</evidence>
<evidence type="ECO:0000269" key="43">
    <source>
    </source>
</evidence>
<evidence type="ECO:0000303" key="44">
    <source>
    </source>
</evidence>
<evidence type="ECO:0000303" key="45">
    <source>
    </source>
</evidence>
<evidence type="ECO:0000303" key="46">
    <source>
    </source>
</evidence>
<evidence type="ECO:0000303" key="47">
    <source>
    </source>
</evidence>
<evidence type="ECO:0000305" key="48"/>
<evidence type="ECO:0007744" key="49">
    <source>
    </source>
</evidence>
<evidence type="ECO:0007829" key="50">
    <source>
        <dbReference type="PDB" id="5KL3"/>
    </source>
</evidence>
<evidence type="ECO:0007829" key="51">
    <source>
        <dbReference type="PDB" id="6B0O"/>
    </source>
</evidence>
<evidence type="ECO:0007829" key="52">
    <source>
        <dbReference type="PDB" id="6B0Q"/>
    </source>
</evidence>
<evidence type="ECO:0007829" key="53">
    <source>
        <dbReference type="PDB" id="6B0R"/>
    </source>
</evidence>
<evidence type="ECO:0007829" key="54">
    <source>
        <dbReference type="PDB" id="6BLW"/>
    </source>
</evidence>
<evidence type="ECO:0007829" key="55">
    <source>
        <dbReference type="PDB" id="6WLH"/>
    </source>
</evidence>